<sequence length="356" mass="40740">MSNVNLSVSDFWRVMMRVCWLVRQDSRHQRIRLPHLEAVVIGRGPETKITDKKCSRQQVQLKAECNKGYVKVKQVGVNPTSIDSVVIGKDQEVKLQPGQVLHMVNELYPYIVEFEEEAKNPGLETHRKRKRSGNSDSIERDAAQEAEAGTGLEPGSNSGQCSVPLKKGKDAPIKKESLGHWSQGLKISMQDPKMQVYKDEQVVVIKDKYPKARYHWLVLPWTSISSLKAVAREHLELLKHMHTVGEKVIVDFAGSSKLRFRLGYHAIPSMSHVHLHVISQDFDSPCLKNKKHWNSFNTEYFLESQAVIEMVQEAGRVTVRDGMPELLKLPLRCHECQQLLPSIPQLKEHLRKHWTQ</sequence>
<proteinExistence type="evidence at protein level"/>
<feature type="chain" id="PRO_0000109838" description="Aprataxin">
    <location>
        <begin position="1"/>
        <end position="356"/>
    </location>
</feature>
<feature type="domain" description="FHA-like">
    <location>
        <begin position="38"/>
        <end position="87"/>
    </location>
</feature>
<feature type="domain" description="HIT" evidence="4">
    <location>
        <begin position="182"/>
        <end position="287"/>
    </location>
</feature>
<feature type="zinc finger region" description="C2H2-type" evidence="3 33 34">
    <location>
        <begin position="331"/>
        <end position="353"/>
    </location>
</feature>
<feature type="region of interest" description="Interactions with ADPRT/PARP1 and NCL">
    <location>
        <begin position="1"/>
        <end position="110"/>
    </location>
</feature>
<feature type="region of interest" description="Disordered" evidence="5">
    <location>
        <begin position="122"/>
        <end position="167"/>
    </location>
</feature>
<feature type="region of interest" description="Interaction with DNA substrate" evidence="22">
    <location>
        <begin position="207"/>
        <end position="211"/>
    </location>
</feature>
<feature type="region of interest" description="Interaction with DNA substrate" evidence="22">
    <location>
        <begin position="269"/>
        <end position="270"/>
    </location>
</feature>
<feature type="short sequence motif" description="Nuclear localization signal" evidence="30">
    <location>
        <begin position="126"/>
        <end position="131"/>
    </location>
</feature>
<feature type="short sequence motif" description="Histidine triad motif" evidence="4 34">
    <location>
        <begin position="272"/>
        <end position="276"/>
    </location>
</feature>
<feature type="active site" description="Tele-AMP-histidine intermediate" evidence="22">
    <location>
        <position position="274"/>
    </location>
</feature>
<feature type="site" description="Interaction with DNA substrate" evidence="22">
    <location>
        <position position="188"/>
    </location>
</feature>
<feature type="site" description="Interaction with DNA substrate" evidence="22">
    <location>
        <position position="265"/>
    </location>
</feature>
<feature type="site" description="Interaction with DNA substrate" evidence="22">
    <location>
        <position position="276"/>
    </location>
</feature>
<feature type="site" description="Interaction with DNA substrate" evidence="22">
    <location>
        <position position="291"/>
    </location>
</feature>
<feature type="modified residue" description="Phosphoserine" evidence="39 40">
    <location>
        <position position="132"/>
    </location>
</feature>
<feature type="modified residue" description="Phosphoserine" evidence="2">
    <location>
        <position position="137"/>
    </location>
</feature>
<feature type="splice variant" id="VSP_010534" description="In isoform 6." evidence="28">
    <location>
        <begin position="1"/>
        <end position="193"/>
    </location>
</feature>
<feature type="splice variant" id="VSP_010535" description="In isoform 2." evidence="23 26 28 29">
    <location>
        <begin position="1"/>
        <end position="188"/>
    </location>
</feature>
<feature type="splice variant" id="VSP_010536" description="In isoform 4." evidence="26 28 29">
    <location>
        <begin position="1"/>
        <end position="102"/>
    </location>
</feature>
<feature type="splice variant" id="VSP_010537" description="In isoform 5, isoform 7, isoform 9, isoform 12 and isoform 13." evidence="25 26 27 28 29">
    <location>
        <begin position="1"/>
        <end position="14"/>
    </location>
</feature>
<feature type="splice variant" id="VSP_010538" description="In isoform 5 and isoform 10." evidence="28 29">
    <location>
        <begin position="59"/>
        <end position="112"/>
    </location>
</feature>
<feature type="splice variant" id="VSP_044091" description="In isoform 12." evidence="25">
    <original>QLKA</original>
    <variation>ESRV</variation>
    <location>
        <begin position="60"/>
        <end position="63"/>
    </location>
</feature>
<feature type="splice variant" id="VSP_044092" description="In isoform 12." evidence="25">
    <location>
        <begin position="64"/>
        <end position="356"/>
    </location>
</feature>
<feature type="splice variant" id="VSP_010539" description="In isoform 3." evidence="28">
    <location>
        <begin position="104"/>
        <end position="175"/>
    </location>
</feature>
<feature type="splice variant" id="VSP_010540" description="In isoform 8." evidence="28">
    <location>
        <begin position="175"/>
        <end position="193"/>
    </location>
</feature>
<feature type="splice variant" id="VSP_044093" description="In isoform 13." evidence="25">
    <original>VYKDEQVVVIKDKYPKARYHWLVLPWTSISSLKAVAREHLELLKHMHTVGEKVIVDFAGSSKLRFRLGYHAIPSMSHVHLHVISQDFDSPCLKNKKHWNSFNTEYFLESQAVIEMVQEAGRVTVRDGMPELLKLPLRCHECQQLLPSIPQLKEHLRKHWTQ</original>
    <variation>PCTSSCDQPGF</variation>
    <location>
        <begin position="196"/>
        <end position="356"/>
    </location>
</feature>
<feature type="splice variant" id="VSP_010541" description="In isoform 6, isoform 9 and isoform 11." evidence="23 27 28">
    <original>AVIEMVQEAGRVTVRDGMPELLKLPLRCHECQQLLPSIPQLKEHLRKHWTQ</original>
    <variation>E</variation>
    <location>
        <begin position="306"/>
        <end position="356"/>
    </location>
</feature>
<feature type="sequence variant" id="VAR_018794" description="In AOA; impairs binding to adenosine-5'-diphospho-5'-(DNA) and deadenylation activity." evidence="9 22">
    <original>K</original>
    <variation>Q</variation>
    <location>
        <position position="211"/>
    </location>
</feature>
<feature type="sequence variant" id="VAR_018795" description="In AOA; heterozygous; dbSNP:rs748165574." evidence="10">
    <original>A</original>
    <variation>V</variation>
    <location>
        <position position="212"/>
    </location>
</feature>
<feature type="sequence variant" id="VAR_018796" description="In AOA; dbSNP:rs150886026." evidence="7">
    <original>R</original>
    <variation>H</variation>
    <location>
        <position position="213"/>
    </location>
</feature>
<feature type="sequence variant" id="VAR_018797" description="In AOA; dbSNP:rs121908133." evidence="8">
    <original>H</original>
    <variation>R</variation>
    <location>
        <position position="215"/>
    </location>
</feature>
<feature type="sequence variant" id="VAR_018798" description="In AOA; dbSNP:rs121908131." evidence="6 7">
    <original>P</original>
    <variation>L</variation>
    <location>
        <position position="220"/>
    </location>
</feature>
<feature type="sequence variant" id="VAR_025365" description="In AOA; dbSNP:rs267606665." evidence="16">
    <original>L</original>
    <variation>P</variation>
    <location>
        <position position="237"/>
    </location>
</feature>
<feature type="sequence variant" id="VAR_018799" description="In AOA; abolishes DNA-binding and enzymatic activity towards Ap(4)A; dbSNP:rs121908132." evidence="6 10 17">
    <original>V</original>
    <variation>G</variation>
    <location>
        <position position="277"/>
    </location>
</feature>
<feature type="sequence variant" id="VAR_018800" description="In AOA; heterozygous.">
    <original>D</original>
    <variation>G</variation>
    <location>
        <position position="281"/>
    </location>
</feature>
<feature type="sequence variant" id="VAR_018801" description="In AOA; heterozygous; dbSNP:rs773393618." evidence="10">
    <original>W</original>
    <variation>R</variation>
    <location>
        <position position="293"/>
    </location>
</feature>
<feature type="mutagenesis site" description="Impairs interaction with XRCC1 and XRCC4. Abolishes localization at sites of DNA double-strand breaks. Loss of interaction with MDC1." evidence="14 21">
    <original>R</original>
    <variation>A</variation>
    <location>
        <position position="43"/>
    </location>
</feature>
<feature type="mutagenesis site" description="Impairs interaction with MDC1 and localization at sites of DNA double-strand breaks." evidence="21">
    <original>K</original>
    <variation>A</variation>
    <location>
        <position position="52"/>
    </location>
</feature>
<feature type="mutagenesis site" description="Abolishes enzyme activity." evidence="19 20">
    <original>H</original>
    <variation>A</variation>
    <location>
        <position position="274"/>
    </location>
</feature>
<feature type="mutagenesis site" description="Abolishes DNA-binding and enzyme activity; when associated with A-336." evidence="20">
    <original>C</original>
    <variation>A</variation>
    <location>
        <position position="333"/>
    </location>
</feature>
<feature type="mutagenesis site" description="Abolishes DNA-binding and enzyme activity; when associated with A-333." evidence="20">
    <original>C</original>
    <variation>A</variation>
    <location>
        <position position="336"/>
    </location>
</feature>
<feature type="strand" evidence="41">
    <location>
        <begin position="18"/>
        <end position="23"/>
    </location>
</feature>
<feature type="strand" evidence="41">
    <location>
        <begin position="30"/>
        <end position="32"/>
    </location>
</feature>
<feature type="strand" evidence="41">
    <location>
        <begin position="38"/>
        <end position="41"/>
    </location>
</feature>
<feature type="turn" evidence="41">
    <location>
        <begin position="45"/>
        <end position="47"/>
    </location>
</feature>
<feature type="strand" evidence="41">
    <location>
        <begin position="59"/>
        <end position="64"/>
    </location>
</feature>
<feature type="turn" evidence="41">
    <location>
        <begin position="65"/>
        <end position="68"/>
    </location>
</feature>
<feature type="strand" evidence="41">
    <location>
        <begin position="69"/>
        <end position="74"/>
    </location>
</feature>
<feature type="strand" evidence="41">
    <location>
        <begin position="76"/>
        <end position="78"/>
    </location>
</feature>
<feature type="strand" evidence="41">
    <location>
        <begin position="92"/>
        <end position="95"/>
    </location>
</feature>
<feature type="strand" evidence="41">
    <location>
        <begin position="101"/>
        <end position="104"/>
    </location>
</feature>
<feature type="strand" evidence="41">
    <location>
        <begin position="107"/>
        <end position="115"/>
    </location>
</feature>
<feature type="helix" evidence="43">
    <location>
        <begin position="181"/>
        <end position="183"/>
    </location>
</feature>
<feature type="helix" evidence="43">
    <location>
        <begin position="184"/>
        <end position="188"/>
    </location>
</feature>
<feature type="turn" evidence="43">
    <location>
        <begin position="192"/>
        <end position="194"/>
    </location>
</feature>
<feature type="strand" evidence="43">
    <location>
        <begin position="195"/>
        <end position="198"/>
    </location>
</feature>
<feature type="strand" evidence="43">
    <location>
        <begin position="200"/>
        <end position="206"/>
    </location>
</feature>
<feature type="strand" evidence="43">
    <location>
        <begin position="211"/>
        <end position="213"/>
    </location>
</feature>
<feature type="strand" evidence="43">
    <location>
        <begin position="215"/>
        <end position="222"/>
    </location>
</feature>
<feature type="helix" evidence="43">
    <location>
        <begin position="227"/>
        <end position="229"/>
    </location>
</feature>
<feature type="helix" evidence="43">
    <location>
        <begin position="232"/>
        <end position="234"/>
    </location>
</feature>
<feature type="helix" evidence="43">
    <location>
        <begin position="235"/>
        <end position="253"/>
    </location>
</feature>
<feature type="helix" evidence="42">
    <location>
        <begin position="254"/>
        <end position="256"/>
    </location>
</feature>
<feature type="strand" evidence="43">
    <location>
        <begin position="260"/>
        <end position="267"/>
    </location>
</feature>
<feature type="strand" evidence="43">
    <location>
        <begin position="269"/>
        <end position="272"/>
    </location>
</feature>
<feature type="strand" evidence="43">
    <location>
        <begin position="275"/>
        <end position="279"/>
    </location>
</feature>
<feature type="helix" evidence="43">
    <location>
        <begin position="290"/>
        <end position="297"/>
    </location>
</feature>
<feature type="strand" evidence="43">
    <location>
        <begin position="301"/>
        <end position="303"/>
    </location>
</feature>
<feature type="helix" evidence="43">
    <location>
        <begin position="304"/>
        <end position="314"/>
    </location>
</feature>
<feature type="helix" evidence="43">
    <location>
        <begin position="323"/>
        <end position="326"/>
    </location>
</feature>
<feature type="turn" evidence="43">
    <location>
        <begin position="334"/>
        <end position="336"/>
    </location>
</feature>
<feature type="strand" evidence="42">
    <location>
        <begin position="339"/>
        <end position="342"/>
    </location>
</feature>
<feature type="helix" evidence="43">
    <location>
        <begin position="343"/>
        <end position="350"/>
    </location>
</feature>
<feature type="helix" evidence="43">
    <location>
        <begin position="351"/>
        <end position="353"/>
    </location>
</feature>
<protein>
    <recommendedName>
        <fullName>Aprataxin</fullName>
        <ecNumber evidence="19 20 22 32">3.6.1.71</ecNumber>
        <ecNumber evidence="1">3.6.1.72</ecNumber>
    </recommendedName>
    <alternativeName>
        <fullName>Forkhead-associated domain histidine triad-like protein</fullName>
        <shortName>FHA-HIT</shortName>
    </alternativeName>
</protein>
<gene>
    <name type="primary">APTX</name>
    <name type="synonym">AXA1</name>
</gene>
<comment type="function">
    <text evidence="1 12 14 17 19 20 22">DNA-binding protein involved in single-strand DNA break repair, double-strand DNA break repair and base excision repair (PubMed:15044383, PubMed:15380105, PubMed:16964241, PubMed:17276982, PubMed:24362567). Resolves abortive DNA ligation intermediates formed either at base excision sites, or when DNA ligases attempt to repair non-ligatable breaks induced by reactive oxygen species (PubMed:16964241, PubMed:24362567). Catalyzes the release of adenylate groups covalently linked to 5'-phosphate termini, resulting in the production of 5'-phosphate termini that can be efficiently rejoined (PubMed:16964241, PubMed:17276982, PubMed:24362567). Also able to hydrolyze adenosine 5'-monophosphoramidate (AMP-NH(2)) and diadenosine tetraphosphate (AppppA), but with lower catalytic activity (PubMed:16547001). Likewise, catalyzes the release of 3'-linked guanosine (DNAppG) and inosine (DNAppI) from DNA, but has higher specific activity with 5'-linked adenosine (AppDNA) (By similarity).</text>
</comment>
<comment type="catalytic activity">
    <reaction evidence="19 20 22 32">
        <text>a 5'-end adenosine-5'-diphospho-5'-2'-deoxyribonucleoside-DNA + H2O = a 5'-end 5'-phospho-2'-deoxyribonucleoside-DNA + AMP + 2 H(+)</text>
        <dbReference type="Rhea" id="RHEA:52128"/>
        <dbReference type="Rhea" id="RHEA-COMP:13180"/>
        <dbReference type="Rhea" id="RHEA-COMP:13181"/>
        <dbReference type="ChEBI" id="CHEBI:15377"/>
        <dbReference type="ChEBI" id="CHEBI:15378"/>
        <dbReference type="ChEBI" id="CHEBI:136412"/>
        <dbReference type="ChEBI" id="CHEBI:136413"/>
        <dbReference type="ChEBI" id="CHEBI:456215"/>
        <dbReference type="EC" id="3.6.1.71"/>
    </reaction>
</comment>
<comment type="catalytic activity">
    <reaction evidence="19 20 22 32">
        <text>a 5'-end adenosine-5'-diphospho-5'-ribonucleoside-2'-deoxyribonucleotide-DNA + H2O = a 5'-end 5'-phospho-ribonucleoside-2'-deoxyribonucleotide-DNA + AMP + 2 H(+)</text>
        <dbReference type="Rhea" id="RHEA:52132"/>
        <dbReference type="Rhea" id="RHEA-COMP:13182"/>
        <dbReference type="Rhea" id="RHEA-COMP:13183"/>
        <dbReference type="ChEBI" id="CHEBI:15377"/>
        <dbReference type="ChEBI" id="CHEBI:15378"/>
        <dbReference type="ChEBI" id="CHEBI:136414"/>
        <dbReference type="ChEBI" id="CHEBI:136415"/>
        <dbReference type="ChEBI" id="CHEBI:456215"/>
        <dbReference type="EC" id="3.6.1.71"/>
    </reaction>
</comment>
<comment type="catalytic activity">
    <reaction evidence="1">
        <text>a 3'-end 2'-deoxyribonucleotide-3'-diphospho-5'-guanosine-DNA + H2O = a 3'-end 2'-deoxyribonucleotide 3'-phosphate-DNA + GMP + 2 H(+)</text>
        <dbReference type="Rhea" id="RHEA:52140"/>
        <dbReference type="Rhea" id="RHEA-COMP:13186"/>
        <dbReference type="Rhea" id="RHEA-COMP:13187"/>
        <dbReference type="ChEBI" id="CHEBI:15377"/>
        <dbReference type="ChEBI" id="CHEBI:15378"/>
        <dbReference type="ChEBI" id="CHEBI:58115"/>
        <dbReference type="ChEBI" id="CHEBI:136419"/>
        <dbReference type="ChEBI" id="CHEBI:136420"/>
        <dbReference type="EC" id="3.6.1.72"/>
    </reaction>
</comment>
<comment type="biophysicochemical properties">
    <kinetics>
        <KM evidence="17">18 uM for AppppA</KM>
        <KM evidence="17">837.5 uM for AMP-NH(2)</KM>
    </kinetics>
</comment>
<comment type="subunit">
    <text evidence="11 12 14 18 21">Interacts with single-strand break repair proteins XRCC1, XRCC4, ADPRT/PARP1 and p53/TP53 (PubMed:14755728, PubMed:15044383, PubMed:15380105, PubMed:16777843). Interacts with NCL (PubMed:15044383, PubMed:16777843). Interacts (via FHA-like domain) with MDC1 (phosphorylated) (PubMed:20008512).</text>
</comment>
<comment type="interaction">
    <interactant intactId="EBI-847814">
        <id>Q7Z2E3</id>
    </interactant>
    <interactant intactId="EBI-355676">
        <id>P09874</id>
        <label>PARP1</label>
    </interactant>
    <organismsDiffer>false</organismsDiffer>
    <experiments>9</experiments>
</comment>
<comment type="interaction">
    <interactant intactId="EBI-847814">
        <id>Q7Z2E3</id>
    </interactant>
    <interactant intactId="EBI-302345">
        <id>Q8ND90</id>
        <label>PNMA1</label>
    </interactant>
    <organismsDiffer>false</organismsDiffer>
    <experiments>3</experiments>
</comment>
<comment type="interaction">
    <interactant intactId="EBI-847814">
        <id>Q7Z2E3</id>
    </interactant>
    <interactant intactId="EBI-947466">
        <id>P18887</id>
        <label>XRCC1</label>
    </interactant>
    <organismsDiffer>false</organismsDiffer>
    <experiments>11</experiments>
</comment>
<comment type="interaction">
    <interactant intactId="EBI-847814">
        <id>Q7Z2E3</id>
    </interactant>
    <interactant intactId="EBI-717592">
        <id>Q13426</id>
        <label>XRCC4</label>
    </interactant>
    <organismsDiffer>false</organismsDiffer>
    <experiments>5</experiments>
</comment>
<comment type="interaction">
    <interactant intactId="EBI-12298187">
        <id>Q7Z2E3-7</id>
    </interactant>
    <interactant intactId="EBI-11526128">
        <id>Q8NFF5-2</id>
        <label>FLAD1</label>
    </interactant>
    <organismsDiffer>false</organismsDiffer>
    <experiments>3</experiments>
</comment>
<comment type="interaction">
    <interactant intactId="EBI-12298187">
        <id>Q7Z2E3-7</id>
    </interactant>
    <interactant intactId="EBI-302345">
        <id>Q8ND90</id>
        <label>PNMA1</label>
    </interactant>
    <organismsDiffer>false</organismsDiffer>
    <experiments>3</experiments>
</comment>
<comment type="interaction">
    <interactant intactId="EBI-12298187">
        <id>Q7Z2E3-7</id>
    </interactant>
    <interactant intactId="EBI-11278955">
        <id>Q9UL41</id>
        <label>PNMA3</label>
    </interactant>
    <organismsDiffer>false</organismsDiffer>
    <experiments>3</experiments>
</comment>
<comment type="subcellular location">
    <subcellularLocation>
        <location evidence="11 12 13 14">Nucleus</location>
        <location evidence="11 12 13 14">Nucleoplasm</location>
    </subcellularLocation>
    <subcellularLocation>
        <location evidence="12 18">Nucleus</location>
        <location evidence="12 18">Nucleolus</location>
    </subcellularLocation>
    <text evidence="12 14 21">Upon genotoxic stress, colocalizes with XRCC1 at sites of DNA damage (PubMed:15380105). Colocalizes with MDC1 at sites of DNA double-strand breaks (PubMed:20008512). Interaction with NCL is required for nucleolar localization (PubMed:16777843).</text>
</comment>
<comment type="subcellular location">
    <molecule>Isoform 12</molecule>
    <subcellularLocation>
        <location evidence="13">Cytoplasm</location>
    </subcellularLocation>
</comment>
<comment type="alternative products">
    <event type="alternative splicing"/>
    <isoform>
        <id>Q7Z2E3-1</id>
        <name>1</name>
        <name evidence="24">Long</name>
        <sequence type="displayed"/>
    </isoform>
    <isoform>
        <id>Q7Z2E3-2</id>
        <name>2</name>
        <name evidence="24">Short</name>
        <sequence type="described" ref="VSP_010535"/>
    </isoform>
    <isoform>
        <id>Q7Z2E3-3</id>
        <name>3</name>
        <sequence type="described" ref="VSP_010539"/>
    </isoform>
    <isoform>
        <id>Q7Z2E3-4</id>
        <name>4</name>
        <sequence type="described" ref="VSP_010536"/>
    </isoform>
    <isoform>
        <id>Q7Z2E3-5</id>
        <name>5</name>
        <sequence type="described" ref="VSP_010537 VSP_010538"/>
    </isoform>
    <isoform>
        <id>Q7Z2E3-6</id>
        <name>6</name>
        <sequence type="described" ref="VSP_010534 VSP_010541"/>
    </isoform>
    <isoform>
        <id>Q7Z2E3-7</id>
        <name>7</name>
        <sequence type="described" ref="VSP_010537"/>
    </isoform>
    <isoform>
        <id>Q7Z2E3-8</id>
        <name>8</name>
        <sequence type="described" ref="VSP_010540"/>
    </isoform>
    <isoform>
        <id>Q7Z2E3-9</id>
        <name>9</name>
        <sequence type="described" ref="VSP_010537 VSP_010541"/>
    </isoform>
    <isoform>
        <id>Q7Z2E3-10</id>
        <name>10</name>
        <sequence type="described" ref="VSP_010538"/>
    </isoform>
    <isoform>
        <id>Q7Z2E3-11</id>
        <name>11</name>
        <sequence type="described" ref="VSP_010541"/>
    </isoform>
    <isoform>
        <id>Q7Z2E3-12</id>
        <name>12</name>
        <name>LP2</name>
        <name>LP2E5</name>
        <name>LP2P3</name>
        <name>LP2P3E5</name>
        <sequence type="described" ref="VSP_010537 VSP_044091 VSP_044092"/>
    </isoform>
    <isoform>
        <id>Q7Z2E3-13</id>
        <name>13</name>
        <name>LE5</name>
        <sequence type="described" ref="VSP_010537 VSP_044093"/>
    </isoform>
</comment>
<comment type="tissue specificity">
    <text evidence="6 7 11 13">Widely expressed; detected in liver, kidney and lymph node (at protein level) (PubMed:14755728). Isoform 1 is highly expressed in the cerebral cortex and cerebellum, compared to isoform 2 (at protein level) (PubMed:14755728). Widely expressed; detected throughout the brain, in liver, kidney, skeletal muscle, fibroblasts, lymphocytes and pancreas (PubMed:11586299, PubMed:11586300, PubMed:15276230).</text>
</comment>
<comment type="domain">
    <text evidence="22">The histidine triad, also called HIT motif, forms part of the binding loop for the alpha-phosphate of purine mononucleotide.</text>
</comment>
<comment type="domain">
    <text>The FHA-like domain mediates interaction with NCL; XRCC1 and XRCC4.</text>
</comment>
<comment type="domain">
    <text>The HIT domain is required for enzymatic activity.</text>
</comment>
<comment type="domain">
    <text>The C2H2-type zinc finger mediates DNA-binding.</text>
</comment>
<comment type="disease" evidence="6 7 8 9 10 15 16 22">
    <disease id="DI-00138">
        <name>Ataxia-oculomotor apraxia syndrome</name>
        <acronym>AOA</acronym>
        <description>An autosomal recessive syndrome characterized by early-onset cerebellar ataxia, oculomotor apraxia, early areflexia and late peripheral neuropathy.</description>
        <dbReference type="MIM" id="208920"/>
    </disease>
    <text>The disease is caused by variants affecting the gene represented in this entry.</text>
</comment>
<comment type="miscellaneous">
    <molecule>Isoform 1</molecule>
    <text evidence="31">Major form.</text>
</comment>
<comment type="miscellaneous">
    <molecule>Isoform 2</molecule>
    <text evidence="31">Minor form.</text>
</comment>
<comment type="miscellaneous">
    <molecule>Isoform 3</molecule>
    <text evidence="30">May be an aberrant isoform present in cancer cell lines.</text>
</comment>
<comment type="miscellaneous">
    <molecule>Isoform 4</molecule>
    <text evidence="30">May be an aberrant isoform present in cancer cell lines.</text>
</comment>
<comment type="miscellaneous">
    <molecule>Isoform 5</molecule>
    <text evidence="30">May be an aberrant isoform present in cancer cell lines.</text>
</comment>
<comment type="miscellaneous">
    <molecule>Isoform 6</molecule>
    <text evidence="30">May be an aberrant isoform present in cancer cell lines.</text>
</comment>
<comment type="miscellaneous">
    <molecule>Isoform 8</molecule>
    <text evidence="30">May be an aberrant isoform present in cancer cell lines.</text>
</comment>
<comment type="miscellaneous">
    <molecule>Isoform 10</molecule>
    <text evidence="30">May be an aberrant isoform present in cancer cell lines.</text>
</comment>
<dbReference type="EC" id="3.6.1.71" evidence="19 20 22 32"/>
<dbReference type="EC" id="3.6.1.72" evidence="1"/>
<dbReference type="EMBL" id="AY302067">
    <property type="protein sequence ID" value="AAQ74130.1"/>
    <property type="molecule type" value="mRNA"/>
</dbReference>
<dbReference type="EMBL" id="AY302068">
    <property type="protein sequence ID" value="AAQ74131.1"/>
    <property type="molecule type" value="mRNA"/>
</dbReference>
<dbReference type="EMBL" id="AY302070">
    <property type="protein sequence ID" value="AAQ74133.1"/>
    <property type="molecule type" value="mRNA"/>
</dbReference>
<dbReference type="EMBL" id="AY302071">
    <property type="protein sequence ID" value="AAQ74134.1"/>
    <property type="molecule type" value="mRNA"/>
</dbReference>
<dbReference type="EMBL" id="AY302072">
    <property type="protein sequence ID" value="AAQ74135.1"/>
    <property type="molecule type" value="mRNA"/>
</dbReference>
<dbReference type="EMBL" id="AY302074">
    <property type="protein sequence ID" value="AAQ74137.1"/>
    <property type="molecule type" value="mRNA"/>
</dbReference>
<dbReference type="EMBL" id="AY040777">
    <property type="protein sequence ID" value="AAK91768.1"/>
    <property type="molecule type" value="mRNA"/>
</dbReference>
<dbReference type="EMBL" id="AY208829">
    <property type="protein sequence ID" value="AAP86319.1"/>
    <property type="molecule type" value="mRNA"/>
</dbReference>
<dbReference type="EMBL" id="AY208830">
    <property type="protein sequence ID" value="AAP86320.1"/>
    <property type="molecule type" value="mRNA"/>
</dbReference>
<dbReference type="EMBL" id="AY208831">
    <property type="protein sequence ID" value="AAP86321.1"/>
    <property type="molecule type" value="mRNA"/>
</dbReference>
<dbReference type="EMBL" id="AY208832">
    <property type="protein sequence ID" value="AAP86322.1"/>
    <property type="molecule type" value="mRNA"/>
</dbReference>
<dbReference type="EMBL" id="AY208833">
    <property type="protein sequence ID" value="AAP86323.1"/>
    <property type="molecule type" value="mRNA"/>
</dbReference>
<dbReference type="EMBL" id="AY208834">
    <property type="protein sequence ID" value="AAP86324.1"/>
    <property type="molecule type" value="mRNA"/>
</dbReference>
<dbReference type="EMBL" id="AY208835">
    <property type="protein sequence ID" value="AAP86325.1"/>
    <property type="molecule type" value="mRNA"/>
</dbReference>
<dbReference type="EMBL" id="AY208836">
    <property type="protein sequence ID" value="AAP86326.1"/>
    <property type="molecule type" value="mRNA"/>
</dbReference>
<dbReference type="EMBL" id="AY208837">
    <property type="protein sequence ID" value="AAP86327.1"/>
    <property type="molecule type" value="mRNA"/>
</dbReference>
<dbReference type="EMBL" id="AY208838">
    <property type="protein sequence ID" value="AAP86328.1"/>
    <property type="molecule type" value="mRNA"/>
</dbReference>
<dbReference type="EMBL" id="AY208839">
    <property type="protein sequence ID" value="AAP86329.1"/>
    <property type="molecule type" value="mRNA"/>
</dbReference>
<dbReference type="EMBL" id="AY208840">
    <property type="protein sequence ID" value="AAP86330.1"/>
    <property type="molecule type" value="mRNA"/>
</dbReference>
<dbReference type="EMBL" id="AY208841">
    <property type="protein sequence ID" value="AAP86331.1"/>
    <property type="molecule type" value="mRNA"/>
</dbReference>
<dbReference type="EMBL" id="AY208842">
    <property type="protein sequence ID" value="AAP86332.1"/>
    <property type="molecule type" value="mRNA"/>
</dbReference>
<dbReference type="EMBL" id="AK000164">
    <property type="protein sequence ID" value="BAA90985.1"/>
    <property type="molecule type" value="mRNA"/>
</dbReference>
<dbReference type="EMBL" id="AK055672">
    <property type="protein sequence ID" value="BAG51552.1"/>
    <property type="molecule type" value="mRNA"/>
</dbReference>
<dbReference type="EMBL" id="BX538161">
    <property type="protein sequence ID" value="CAD98041.1"/>
    <property type="molecule type" value="mRNA"/>
</dbReference>
<dbReference type="EMBL" id="AL162590">
    <property type="status" value="NOT_ANNOTATED_CDS"/>
    <property type="molecule type" value="Genomic_DNA"/>
</dbReference>
<dbReference type="EMBL" id="AL353717">
    <property type="status" value="NOT_ANNOTATED_CDS"/>
    <property type="molecule type" value="Genomic_DNA"/>
</dbReference>
<dbReference type="EMBL" id="CH471071">
    <property type="protein sequence ID" value="EAW58530.1"/>
    <property type="molecule type" value="Genomic_DNA"/>
</dbReference>
<dbReference type="EMBL" id="CH471071">
    <property type="protein sequence ID" value="EAW58529.1"/>
    <property type="molecule type" value="Genomic_DNA"/>
</dbReference>
<dbReference type="EMBL" id="CH471071">
    <property type="protein sequence ID" value="EAW58531.1"/>
    <property type="molecule type" value="Genomic_DNA"/>
</dbReference>
<dbReference type="EMBL" id="CH471071">
    <property type="protein sequence ID" value="EAW58532.1"/>
    <property type="molecule type" value="Genomic_DNA"/>
</dbReference>
<dbReference type="EMBL" id="CH471071">
    <property type="protein sequence ID" value="EAW58534.1"/>
    <property type="molecule type" value="Genomic_DNA"/>
</dbReference>
<dbReference type="EMBL" id="CH471071">
    <property type="protein sequence ID" value="EAW58535.1"/>
    <property type="molecule type" value="Genomic_DNA"/>
</dbReference>
<dbReference type="EMBL" id="BC001628">
    <property type="protein sequence ID" value="AAH01628.1"/>
    <property type="molecule type" value="mRNA"/>
</dbReference>
<dbReference type="EMBL" id="BC032650">
    <property type="protein sequence ID" value="AAH32650.1"/>
    <property type="molecule type" value="mRNA"/>
</dbReference>
<dbReference type="EMBL" id="BC104881">
    <property type="protein sequence ID" value="AAI04882.1"/>
    <property type="molecule type" value="mRNA"/>
</dbReference>
<dbReference type="EMBL" id="AJ565850">
    <property type="protein sequence ID" value="CAD92454.1"/>
    <property type="molecule type" value="mRNA"/>
</dbReference>
<dbReference type="EMBL" id="AJ565851">
    <property type="protein sequence ID" value="CAD92455.1"/>
    <property type="molecule type" value="mRNA"/>
</dbReference>
<dbReference type="EMBL" id="AJ565852">
    <property type="protein sequence ID" value="CAD92456.1"/>
    <property type="molecule type" value="mRNA"/>
</dbReference>
<dbReference type="EMBL" id="AJ565853">
    <property type="protein sequence ID" value="CAD92457.1"/>
    <property type="molecule type" value="mRNA"/>
</dbReference>
<dbReference type="EMBL" id="AJ565854">
    <property type="protein sequence ID" value="CAD92458.1"/>
    <property type="molecule type" value="mRNA"/>
</dbReference>
<dbReference type="EMBL" id="AJ565855">
    <property type="protein sequence ID" value="CAD92459.1"/>
    <property type="molecule type" value="mRNA"/>
</dbReference>
<dbReference type="EMBL" id="AJ575566">
    <property type="protein sequence ID" value="CAE01427.1"/>
    <property type="molecule type" value="mRNA"/>
</dbReference>
<dbReference type="CCDS" id="CCDS47956.1">
    <molecule id="Q7Z2E3-7"/>
</dbReference>
<dbReference type="CCDS" id="CCDS47957.1">
    <molecule id="Q7Z2E3-4"/>
</dbReference>
<dbReference type="CCDS" id="CCDS6532.2">
    <molecule id="Q7Z2E3-9"/>
</dbReference>
<dbReference type="CCDS" id="CCDS75827.1">
    <molecule id="Q7Z2E3-5"/>
</dbReference>
<dbReference type="RefSeq" id="NP_001182177.2">
    <molecule id="Q7Z2E3-7"/>
    <property type="nucleotide sequence ID" value="NM_001195248.2"/>
</dbReference>
<dbReference type="RefSeq" id="NP_001182178.1">
    <molecule id="Q7Z2E3-7"/>
    <property type="nucleotide sequence ID" value="NM_001195249.2"/>
</dbReference>
<dbReference type="RefSeq" id="NP_001182179.2">
    <molecule id="Q7Z2E3-5"/>
    <property type="nucleotide sequence ID" value="NM_001195250.2"/>
</dbReference>
<dbReference type="RefSeq" id="NP_001182180.1">
    <molecule id="Q7Z2E3-9"/>
    <property type="nucleotide sequence ID" value="NM_001195251.2"/>
</dbReference>
<dbReference type="RefSeq" id="NP_001182181.1">
    <property type="nucleotide sequence ID" value="NM_001195252.1"/>
</dbReference>
<dbReference type="RefSeq" id="NP_001182183.1">
    <molecule id="Q7Z2E3-5"/>
    <property type="nucleotide sequence ID" value="NM_001195254.2"/>
</dbReference>
<dbReference type="RefSeq" id="NP_001355924.1">
    <molecule id="Q7Z2E3-7"/>
    <property type="nucleotide sequence ID" value="NM_001368995.1"/>
</dbReference>
<dbReference type="RefSeq" id="NP_001355925.1">
    <molecule id="Q7Z2E3-7"/>
    <property type="nucleotide sequence ID" value="NM_001368996.1"/>
</dbReference>
<dbReference type="RefSeq" id="NP_001355926.1">
    <molecule id="Q7Z2E3-7"/>
    <property type="nucleotide sequence ID" value="NM_001368997.1"/>
</dbReference>
<dbReference type="RefSeq" id="NP_001355927.1">
    <molecule id="Q7Z2E3-7"/>
    <property type="nucleotide sequence ID" value="NM_001368998.1"/>
</dbReference>
<dbReference type="RefSeq" id="NP_001355928.1">
    <molecule id="Q7Z2E3-9"/>
    <property type="nucleotide sequence ID" value="NM_001368999.1"/>
</dbReference>
<dbReference type="RefSeq" id="NP_001355929.1">
    <molecule id="Q7Z2E3-5"/>
    <property type="nucleotide sequence ID" value="NM_001369000.1"/>
</dbReference>
<dbReference type="RefSeq" id="NP_001355930.1">
    <molecule id="Q7Z2E3-5"/>
    <property type="nucleotide sequence ID" value="NM_001369001.1"/>
</dbReference>
<dbReference type="RefSeq" id="NP_001355931.1">
    <molecule id="Q7Z2E3-4"/>
    <property type="nucleotide sequence ID" value="NM_001369002.1"/>
</dbReference>
<dbReference type="RefSeq" id="NP_001355932.1">
    <molecule id="Q7Z2E3-4"/>
    <property type="nucleotide sequence ID" value="NM_001369003.1"/>
</dbReference>
<dbReference type="RefSeq" id="NP_001355933.1">
    <molecule id="Q7Z2E3-4"/>
    <property type="nucleotide sequence ID" value="NM_001369004.1"/>
</dbReference>
<dbReference type="RefSeq" id="NP_001355934.1">
    <molecule id="Q7Z2E3-4"/>
    <property type="nucleotide sequence ID" value="NM_001369005.1"/>
</dbReference>
<dbReference type="RefSeq" id="NP_001357598.1">
    <molecule id="Q7Z2E3-4"/>
    <property type="nucleotide sequence ID" value="NM_001370669.1"/>
</dbReference>
<dbReference type="RefSeq" id="NP_001357599.1">
    <molecule id="Q7Z2E3-4"/>
    <property type="nucleotide sequence ID" value="NM_001370670.1"/>
</dbReference>
<dbReference type="RefSeq" id="NP_001357602.1">
    <molecule id="Q7Z2E3-4"/>
    <property type="nucleotide sequence ID" value="NM_001370673.1"/>
</dbReference>
<dbReference type="RefSeq" id="NP_778239.2">
    <molecule id="Q7Z2E3-9"/>
    <property type="nucleotide sequence ID" value="NM_175069.3"/>
</dbReference>
<dbReference type="RefSeq" id="NP_778243.1">
    <molecule id="Q7Z2E3-7"/>
    <property type="nucleotide sequence ID" value="NM_175073.3"/>
</dbReference>
<dbReference type="RefSeq" id="XP_006716854.1">
    <property type="nucleotide sequence ID" value="XM_006716791.3"/>
</dbReference>
<dbReference type="RefSeq" id="XP_006716855.1">
    <property type="nucleotide sequence ID" value="XM_006716792.2"/>
</dbReference>
<dbReference type="RefSeq" id="XP_011516240.1">
    <property type="nucleotide sequence ID" value="XM_011517938.1"/>
</dbReference>
<dbReference type="RefSeq" id="XP_011516241.1">
    <property type="nucleotide sequence ID" value="XM_011517939.2"/>
</dbReference>
<dbReference type="RefSeq" id="XP_016870326.1">
    <property type="nucleotide sequence ID" value="XM_017014837.1"/>
</dbReference>
<dbReference type="PDB" id="3KT9">
    <property type="method" value="X-ray"/>
    <property type="resolution" value="1.65 A"/>
    <property type="chains" value="A=15-116"/>
</dbReference>
<dbReference type="PDB" id="4NDF">
    <property type="method" value="X-ray"/>
    <property type="resolution" value="1.94 A"/>
    <property type="chains" value="A/B=179-356"/>
</dbReference>
<dbReference type="PDB" id="4NDG">
    <property type="method" value="X-ray"/>
    <property type="resolution" value="2.54 A"/>
    <property type="chains" value="A/B=179-356"/>
</dbReference>
<dbReference type="PDB" id="4NDH">
    <property type="method" value="X-ray"/>
    <property type="resolution" value="1.85 A"/>
    <property type="chains" value="A/B=179-356"/>
</dbReference>
<dbReference type="PDB" id="4NDI">
    <property type="method" value="X-ray"/>
    <property type="resolution" value="1.90 A"/>
    <property type="chains" value="A/B=179-356"/>
</dbReference>
<dbReference type="PDB" id="6CVO">
    <property type="method" value="X-ray"/>
    <property type="resolution" value="2.40 A"/>
    <property type="chains" value="A/B=179-356"/>
</dbReference>
<dbReference type="PDB" id="6CVP">
    <property type="method" value="X-ray"/>
    <property type="resolution" value="2.00 A"/>
    <property type="chains" value="A/B=179-356"/>
</dbReference>
<dbReference type="PDB" id="6CVQ">
    <property type="method" value="X-ray"/>
    <property type="resolution" value="1.65 A"/>
    <property type="chains" value="A/B=179-354"/>
</dbReference>
<dbReference type="PDB" id="6CVR">
    <property type="method" value="X-ray"/>
    <property type="resolution" value="1.88 A"/>
    <property type="chains" value="A/B=179-356"/>
</dbReference>
<dbReference type="PDB" id="6CVS">
    <property type="method" value="X-ray"/>
    <property type="resolution" value="2.11 A"/>
    <property type="chains" value="A/B=179-356"/>
</dbReference>
<dbReference type="PDB" id="6CVT">
    <property type="method" value="X-ray"/>
    <property type="resolution" value="2.94 A"/>
    <property type="chains" value="A/B=179-356"/>
</dbReference>
<dbReference type="PDBsum" id="3KT9"/>
<dbReference type="PDBsum" id="4NDF"/>
<dbReference type="PDBsum" id="4NDG"/>
<dbReference type="PDBsum" id="4NDH"/>
<dbReference type="PDBsum" id="4NDI"/>
<dbReference type="PDBsum" id="6CVO"/>
<dbReference type="PDBsum" id="6CVP"/>
<dbReference type="PDBsum" id="6CVQ"/>
<dbReference type="PDBsum" id="6CVR"/>
<dbReference type="PDBsum" id="6CVS"/>
<dbReference type="PDBsum" id="6CVT"/>
<dbReference type="SMR" id="Q7Z2E3"/>
<dbReference type="BioGRID" id="120191">
    <property type="interactions" value="83"/>
</dbReference>
<dbReference type="ComplexPortal" id="CPX-793">
    <property type="entry name" value="XRCC1 DNA repair complex"/>
</dbReference>
<dbReference type="FunCoup" id="Q7Z2E3">
    <property type="interactions" value="2900"/>
</dbReference>
<dbReference type="IntAct" id="Q7Z2E3">
    <property type="interactions" value="72"/>
</dbReference>
<dbReference type="MINT" id="Q7Z2E3"/>
<dbReference type="STRING" id="9606.ENSP00000369145"/>
<dbReference type="ChEMBL" id="CHEMBL4523362"/>
<dbReference type="GlyCosmos" id="Q7Z2E3">
    <property type="glycosylation" value="1 site, 1 glycan"/>
</dbReference>
<dbReference type="GlyGen" id="Q7Z2E3">
    <property type="glycosylation" value="1 site, 1 O-linked glycan (1 site)"/>
</dbReference>
<dbReference type="iPTMnet" id="Q7Z2E3"/>
<dbReference type="PhosphoSitePlus" id="Q7Z2E3"/>
<dbReference type="SwissPalm" id="Q7Z2E3"/>
<dbReference type="BioMuta" id="APTX"/>
<dbReference type="DMDM" id="48428038"/>
<dbReference type="jPOST" id="Q7Z2E3"/>
<dbReference type="MassIVE" id="Q7Z2E3"/>
<dbReference type="PaxDb" id="9606-ENSP00000400806"/>
<dbReference type="PeptideAtlas" id="Q7Z2E3"/>
<dbReference type="ProteomicsDB" id="66521"/>
<dbReference type="ProteomicsDB" id="66522"/>
<dbReference type="ProteomicsDB" id="68945">
    <molecule id="Q7Z2E3-1"/>
</dbReference>
<dbReference type="ProteomicsDB" id="68946">
    <molecule id="Q7Z2E3-10"/>
</dbReference>
<dbReference type="ProteomicsDB" id="68947">
    <molecule id="Q7Z2E3-11"/>
</dbReference>
<dbReference type="ProteomicsDB" id="68948">
    <molecule id="Q7Z2E3-2"/>
</dbReference>
<dbReference type="ProteomicsDB" id="68949">
    <molecule id="Q7Z2E3-3"/>
</dbReference>
<dbReference type="ProteomicsDB" id="68950">
    <molecule id="Q7Z2E3-4"/>
</dbReference>
<dbReference type="ProteomicsDB" id="68951">
    <molecule id="Q7Z2E3-5"/>
</dbReference>
<dbReference type="ProteomicsDB" id="68952">
    <molecule id="Q7Z2E3-6"/>
</dbReference>
<dbReference type="ProteomicsDB" id="68953">
    <molecule id="Q7Z2E3-7"/>
</dbReference>
<dbReference type="ProteomicsDB" id="68954">
    <molecule id="Q7Z2E3-8"/>
</dbReference>
<dbReference type="ProteomicsDB" id="68955">
    <molecule id="Q7Z2E3-9"/>
</dbReference>
<dbReference type="Pumba" id="Q7Z2E3"/>
<dbReference type="TopDownProteomics" id="Q7Z2E3-5">
    <molecule id="Q7Z2E3-5"/>
</dbReference>
<dbReference type="Antibodypedia" id="10716">
    <property type="antibodies" value="236 antibodies from 30 providers"/>
</dbReference>
<dbReference type="DNASU" id="54840"/>
<dbReference type="Ensembl" id="ENST00000309615.8">
    <molecule id="Q7Z2E3-5"/>
    <property type="protein sequence ID" value="ENSP00000311547.4"/>
    <property type="gene ID" value="ENSG00000137074.20"/>
</dbReference>
<dbReference type="Ensembl" id="ENST00000379817.7">
    <molecule id="Q7Z2E3-7"/>
    <property type="protein sequence ID" value="ENSP00000369145.2"/>
    <property type="gene ID" value="ENSG00000137074.20"/>
</dbReference>
<dbReference type="Ensembl" id="ENST00000379819.6">
    <molecule id="Q7Z2E3-7"/>
    <property type="protein sequence ID" value="ENSP00000369147.2"/>
    <property type="gene ID" value="ENSG00000137074.20"/>
</dbReference>
<dbReference type="Ensembl" id="ENST00000379825.7">
    <molecule id="Q7Z2E3-9"/>
    <property type="protein sequence ID" value="ENSP00000369153.3"/>
    <property type="gene ID" value="ENSG00000137074.20"/>
</dbReference>
<dbReference type="Ensembl" id="ENST00000436040.7">
    <molecule id="Q7Z2E3-5"/>
    <property type="protein sequence ID" value="ENSP00000400806.4"/>
    <property type="gene ID" value="ENSG00000137074.20"/>
</dbReference>
<dbReference type="Ensembl" id="ENST00000460940.6">
    <molecule id="Q7Z2E3-12"/>
    <property type="protein sequence ID" value="ENSP00000418311.1"/>
    <property type="gene ID" value="ENSG00000137074.20"/>
</dbReference>
<dbReference type="Ensembl" id="ENST00000463596.6">
    <molecule id="Q7Z2E3-7"/>
    <property type="protein sequence ID" value="ENSP00000419846.1"/>
    <property type="gene ID" value="ENSG00000137074.20"/>
</dbReference>
<dbReference type="Ensembl" id="ENST00000464632.6">
    <molecule id="Q7Z2E3-12"/>
    <property type="protein sequence ID" value="ENSP00000418069.2"/>
    <property type="gene ID" value="ENSG00000137074.20"/>
</dbReference>
<dbReference type="Ensembl" id="ENST00000465003.6">
    <molecule id="Q7Z2E3-12"/>
    <property type="protein sequence ID" value="ENSP00000419430.2"/>
    <property type="gene ID" value="ENSG00000137074.20"/>
</dbReference>
<dbReference type="Ensembl" id="ENST00000467331.6">
    <molecule id="Q7Z2E3-12"/>
    <property type="protein sequence ID" value="ENSP00000418733.1"/>
    <property type="gene ID" value="ENSG00000137074.20"/>
</dbReference>
<dbReference type="Ensembl" id="ENST00000468275.6">
    <molecule id="Q7Z2E3-9"/>
    <property type="protein sequence ID" value="ENSP00000420263.2"/>
    <property type="gene ID" value="ENSG00000137074.20"/>
</dbReference>
<dbReference type="Ensembl" id="ENST00000476858.6">
    <molecule id="Q7Z2E3-5"/>
    <property type="protein sequence ID" value="ENSP00000419042.2"/>
    <property type="gene ID" value="ENSG00000137074.20"/>
</dbReference>
<dbReference type="Ensembl" id="ENST00000479656.6">
    <molecule id="Q7Z2E3-12"/>
    <property type="protein sequence ID" value="ENSP00000420071.1"/>
    <property type="gene ID" value="ENSG00000137074.20"/>
</dbReference>
<dbReference type="Ensembl" id="ENST00000482687.6">
    <molecule id="Q7Z2E3-12"/>
    <property type="protein sequence ID" value="ENSP00000419289.2"/>
    <property type="gene ID" value="ENSG00000137074.20"/>
</dbReference>
<dbReference type="Ensembl" id="ENST00000485479.6">
    <molecule id="Q7Z2E3-12"/>
    <property type="protein sequence ID" value="ENSP00000418144.1"/>
    <property type="gene ID" value="ENSG00000137074.20"/>
</dbReference>
<dbReference type="Ensembl" id="ENST00000494649.5">
    <molecule id="Q7Z2E3-12"/>
    <property type="protein sequence ID" value="ENSP00000417634.1"/>
    <property type="gene ID" value="ENSG00000137074.20"/>
</dbReference>
<dbReference type="Ensembl" id="ENST00000672438.1">
    <molecule id="Q7Z2E3-4"/>
    <property type="protein sequence ID" value="ENSP00000499997.1"/>
    <property type="gene ID" value="ENSG00000137074.20"/>
</dbReference>
<dbReference type="Ensembl" id="ENST00000672519.1">
    <molecule id="Q7Z2E3-12"/>
    <property type="protein sequence ID" value="ENSP00000500320.1"/>
    <property type="gene ID" value="ENSG00000137074.20"/>
</dbReference>
<dbReference type="Ensembl" id="ENST00000672535.1">
    <molecule id="Q7Z2E3-12"/>
    <property type="protein sequence ID" value="ENSP00000499872.1"/>
    <property type="gene ID" value="ENSG00000137074.20"/>
</dbReference>
<dbReference type="Ensembl" id="ENST00000672846.1">
    <molecule id="Q7Z2E3-12"/>
    <property type="protein sequence ID" value="ENSP00000500396.1"/>
    <property type="gene ID" value="ENSG00000137074.20"/>
</dbReference>
<dbReference type="Ensembl" id="ENST00000673248.1">
    <molecule id="Q7Z2E3-4"/>
    <property type="protein sequence ID" value="ENSP00000500601.1"/>
    <property type="gene ID" value="ENSG00000137074.20"/>
</dbReference>
<dbReference type="Ensembl" id="ENST00000673416.1">
    <molecule id="Q7Z2E3-4"/>
    <property type="protein sequence ID" value="ENSP00000500738.1"/>
    <property type="gene ID" value="ENSG00000137074.20"/>
</dbReference>
<dbReference type="Ensembl" id="ENST00000673487.1">
    <molecule id="Q7Z2E3-12"/>
    <property type="protein sequence ID" value="ENSP00000500943.1"/>
    <property type="gene ID" value="ENSG00000137074.20"/>
</dbReference>
<dbReference type="Ensembl" id="ENST00000673598.1">
    <molecule id="Q7Z2E3-2"/>
    <property type="protein sequence ID" value="ENSP00000499991.1"/>
    <property type="gene ID" value="ENSG00000137074.20"/>
</dbReference>
<dbReference type="GeneID" id="54840"/>
<dbReference type="KEGG" id="hsa:54840"/>
<dbReference type="MANE-Select" id="ENST00000379817.7">
    <molecule id="Q7Z2E3-7"/>
    <property type="protein sequence ID" value="ENSP00000369145.2"/>
    <property type="RefSeq nucleotide sequence ID" value="NM_001195248.2"/>
    <property type="RefSeq protein sequence ID" value="NP_001182177.2"/>
</dbReference>
<dbReference type="UCSC" id="uc003zrm.4">
    <molecule id="Q7Z2E3-1"/>
    <property type="organism name" value="human"/>
</dbReference>
<dbReference type="AGR" id="HGNC:15984"/>
<dbReference type="CTD" id="54840"/>
<dbReference type="DisGeNET" id="54840"/>
<dbReference type="GeneCards" id="APTX"/>
<dbReference type="HGNC" id="HGNC:15984">
    <property type="gene designation" value="APTX"/>
</dbReference>
<dbReference type="HPA" id="ENSG00000137074">
    <property type="expression patterns" value="Low tissue specificity"/>
</dbReference>
<dbReference type="MalaCards" id="APTX"/>
<dbReference type="MIM" id="208920">
    <property type="type" value="phenotype"/>
</dbReference>
<dbReference type="MIM" id="606350">
    <property type="type" value="gene"/>
</dbReference>
<dbReference type="neXtProt" id="NX_Q7Z2E3"/>
<dbReference type="OpenTargets" id="ENSG00000137074"/>
<dbReference type="Orphanet" id="1168">
    <property type="disease" value="Ataxia-oculomotor apraxia type 1"/>
</dbReference>
<dbReference type="PharmGKB" id="PA24915"/>
<dbReference type="VEuPathDB" id="HostDB:ENSG00000137074"/>
<dbReference type="eggNOG" id="KOG0562">
    <property type="taxonomic scope" value="Eukaryota"/>
</dbReference>
<dbReference type="eggNOG" id="KOG2134">
    <property type="taxonomic scope" value="Eukaryota"/>
</dbReference>
<dbReference type="GeneTree" id="ENSGT00940000156806"/>
<dbReference type="HOGENOM" id="CLU_066882_2_1_1"/>
<dbReference type="InParanoid" id="Q7Z2E3"/>
<dbReference type="OMA" id="QFRTGYH"/>
<dbReference type="OrthoDB" id="3512845at2759"/>
<dbReference type="PAN-GO" id="Q7Z2E3">
    <property type="GO annotations" value="8 GO annotations based on evolutionary models"/>
</dbReference>
<dbReference type="PhylomeDB" id="Q7Z2E3"/>
<dbReference type="TreeFam" id="TF313308"/>
<dbReference type="BioCyc" id="MetaCyc:ENSG00000137074-MONOMER"/>
<dbReference type="BRENDA" id="3.1.11.7">
    <property type="organism ID" value="2681"/>
</dbReference>
<dbReference type="BRENDA" id="3.6.1.70">
    <property type="organism ID" value="2681"/>
</dbReference>
<dbReference type="BRENDA" id="3.6.1.71">
    <property type="organism ID" value="2681"/>
</dbReference>
<dbReference type="BRENDA" id="3.6.1.72">
    <property type="organism ID" value="2681"/>
</dbReference>
<dbReference type="PathwayCommons" id="Q7Z2E3"/>
<dbReference type="SABIO-RK" id="Q7Z2E3"/>
<dbReference type="SignaLink" id="Q7Z2E3"/>
<dbReference type="SIGNOR" id="Q7Z2E3"/>
<dbReference type="BioGRID-ORCS" id="54840">
    <property type="hits" value="15 hits in 1160 CRISPR screens"/>
</dbReference>
<dbReference type="CD-CODE" id="91857CE7">
    <property type="entry name" value="Nucleolus"/>
</dbReference>
<dbReference type="ChiTaRS" id="APTX">
    <property type="organism name" value="human"/>
</dbReference>
<dbReference type="EvolutionaryTrace" id="Q7Z2E3"/>
<dbReference type="GeneWiki" id="Aprataxin"/>
<dbReference type="GenomeRNAi" id="54840"/>
<dbReference type="Pharos" id="Q7Z2E3">
    <property type="development level" value="Tbio"/>
</dbReference>
<dbReference type="PRO" id="PR:Q7Z2E3"/>
<dbReference type="Proteomes" id="UP000005640">
    <property type="component" value="Chromosome 9"/>
</dbReference>
<dbReference type="RNAct" id="Q7Z2E3">
    <property type="molecule type" value="protein"/>
</dbReference>
<dbReference type="Bgee" id="ENSG00000137074">
    <property type="expression patterns" value="Expressed in colonic epithelium and 192 other cell types or tissues"/>
</dbReference>
<dbReference type="ExpressionAtlas" id="Q7Z2E3">
    <property type="expression patterns" value="baseline and differential"/>
</dbReference>
<dbReference type="GO" id="GO:0000785">
    <property type="term" value="C:chromatin"/>
    <property type="evidence" value="ECO:0000314"/>
    <property type="project" value="UniProtKB"/>
</dbReference>
<dbReference type="GO" id="GO:0005737">
    <property type="term" value="C:cytoplasm"/>
    <property type="evidence" value="ECO:0007669"/>
    <property type="project" value="UniProtKB-SubCell"/>
</dbReference>
<dbReference type="GO" id="GO:0005730">
    <property type="term" value="C:nucleolus"/>
    <property type="evidence" value="ECO:0000314"/>
    <property type="project" value="HPA"/>
</dbReference>
<dbReference type="GO" id="GO:0005654">
    <property type="term" value="C:nucleoplasm"/>
    <property type="evidence" value="ECO:0000314"/>
    <property type="project" value="HPA"/>
</dbReference>
<dbReference type="GO" id="GO:0005634">
    <property type="term" value="C:nucleus"/>
    <property type="evidence" value="ECO:0000318"/>
    <property type="project" value="GO_Central"/>
</dbReference>
<dbReference type="GO" id="GO:0003682">
    <property type="term" value="F:chromatin binding"/>
    <property type="evidence" value="ECO:0000314"/>
    <property type="project" value="UniProtKB"/>
</dbReference>
<dbReference type="GO" id="GO:0003684">
    <property type="term" value="F:damaged DNA binding"/>
    <property type="evidence" value="ECO:0000314"/>
    <property type="project" value="UniProtKB"/>
</dbReference>
<dbReference type="GO" id="GO:0033699">
    <property type="term" value="F:DNA 5'-adenosine monophosphate hydrolase activity"/>
    <property type="evidence" value="ECO:0000314"/>
    <property type="project" value="UniProtKB"/>
</dbReference>
<dbReference type="GO" id="GO:0120108">
    <property type="term" value="F:DNA-3'-diphospho-5'-guanosine diphosphatase"/>
    <property type="evidence" value="ECO:0007669"/>
    <property type="project" value="UniProtKB-EC"/>
</dbReference>
<dbReference type="GO" id="GO:0003690">
    <property type="term" value="F:double-stranded DNA binding"/>
    <property type="evidence" value="ECO:0000314"/>
    <property type="project" value="UniProtKB"/>
</dbReference>
<dbReference type="GO" id="GO:0003725">
    <property type="term" value="F:double-stranded RNA binding"/>
    <property type="evidence" value="ECO:0000314"/>
    <property type="project" value="UniProtKB"/>
</dbReference>
<dbReference type="GO" id="GO:0030983">
    <property type="term" value="F:mismatched DNA binding"/>
    <property type="evidence" value="ECO:0000318"/>
    <property type="project" value="GO_Central"/>
</dbReference>
<dbReference type="GO" id="GO:0008967">
    <property type="term" value="F:phosphoglycolate phosphatase activity"/>
    <property type="evidence" value="ECO:0000314"/>
    <property type="project" value="UniProtKB"/>
</dbReference>
<dbReference type="GO" id="GO:0051219">
    <property type="term" value="F:phosphoprotein binding"/>
    <property type="evidence" value="ECO:0000353"/>
    <property type="project" value="UniProtKB"/>
</dbReference>
<dbReference type="GO" id="GO:0046403">
    <property type="term" value="F:polynucleotide 3'-phosphatase activity"/>
    <property type="evidence" value="ECO:0000314"/>
    <property type="project" value="UniProtKB"/>
</dbReference>
<dbReference type="GO" id="GO:1990165">
    <property type="term" value="F:single-strand break-containing DNA binding"/>
    <property type="evidence" value="ECO:0000318"/>
    <property type="project" value="GO_Central"/>
</dbReference>
<dbReference type="GO" id="GO:0003697">
    <property type="term" value="F:single-stranded DNA binding"/>
    <property type="evidence" value="ECO:0000318"/>
    <property type="project" value="GO_Central"/>
</dbReference>
<dbReference type="GO" id="GO:0008270">
    <property type="term" value="F:zinc ion binding"/>
    <property type="evidence" value="ECO:0007669"/>
    <property type="project" value="UniProtKB-KW"/>
</dbReference>
<dbReference type="GO" id="GO:0031647">
    <property type="term" value="P:regulation of protein stability"/>
    <property type="evidence" value="ECO:0000315"/>
    <property type="project" value="UniProtKB"/>
</dbReference>
<dbReference type="GO" id="GO:0000012">
    <property type="term" value="P:single strand break repair"/>
    <property type="evidence" value="ECO:0000314"/>
    <property type="project" value="UniProtKB"/>
</dbReference>
<dbReference type="CDD" id="cd01278">
    <property type="entry name" value="aprataxin_related"/>
    <property type="match status" value="1"/>
</dbReference>
<dbReference type="CDD" id="cd22735">
    <property type="entry name" value="FHA_APTX"/>
    <property type="match status" value="1"/>
</dbReference>
<dbReference type="FunFam" id="2.60.200.20:FF:000010">
    <property type="entry name" value="aprataxin isoform X1"/>
    <property type="match status" value="1"/>
</dbReference>
<dbReference type="FunFam" id="3.30.428.10:FF:000004">
    <property type="entry name" value="aprataxin isoform X2"/>
    <property type="match status" value="1"/>
</dbReference>
<dbReference type="Gene3D" id="2.60.200.20">
    <property type="match status" value="1"/>
</dbReference>
<dbReference type="Gene3D" id="3.30.428.10">
    <property type="entry name" value="HIT-like"/>
    <property type="match status" value="1"/>
</dbReference>
<dbReference type="InterPro" id="IPR041388">
    <property type="entry name" value="FHA_2"/>
</dbReference>
<dbReference type="InterPro" id="IPR047289">
    <property type="entry name" value="FHA_APTX"/>
</dbReference>
<dbReference type="InterPro" id="IPR019808">
    <property type="entry name" value="Histidine_triad_CS"/>
</dbReference>
<dbReference type="InterPro" id="IPR011146">
    <property type="entry name" value="HIT-like"/>
</dbReference>
<dbReference type="InterPro" id="IPR036265">
    <property type="entry name" value="HIT-like_sf"/>
</dbReference>
<dbReference type="InterPro" id="IPR008984">
    <property type="entry name" value="SMAD_FHA_dom_sf"/>
</dbReference>
<dbReference type="InterPro" id="IPR032566">
    <property type="entry name" value="Znf-C2HE"/>
</dbReference>
<dbReference type="InterPro" id="IPR013087">
    <property type="entry name" value="Znf_C2H2_type"/>
</dbReference>
<dbReference type="PANTHER" id="PTHR12486:SF4">
    <property type="entry name" value="APRATAXIN"/>
    <property type="match status" value="1"/>
</dbReference>
<dbReference type="PANTHER" id="PTHR12486">
    <property type="entry name" value="APRATAXIN-RELATED"/>
    <property type="match status" value="1"/>
</dbReference>
<dbReference type="Pfam" id="PF11969">
    <property type="entry name" value="DcpS_C"/>
    <property type="match status" value="1"/>
</dbReference>
<dbReference type="Pfam" id="PF17913">
    <property type="entry name" value="FHA_2"/>
    <property type="match status" value="1"/>
</dbReference>
<dbReference type="Pfam" id="PF16278">
    <property type="entry name" value="zf-C2HE"/>
    <property type="match status" value="1"/>
</dbReference>
<dbReference type="SUPFAM" id="SSF54197">
    <property type="entry name" value="HIT-like"/>
    <property type="match status" value="1"/>
</dbReference>
<dbReference type="SUPFAM" id="SSF49879">
    <property type="entry name" value="SMAD/FHA domain"/>
    <property type="match status" value="1"/>
</dbReference>
<dbReference type="PROSITE" id="PS00892">
    <property type="entry name" value="HIT_1"/>
    <property type="match status" value="1"/>
</dbReference>
<dbReference type="PROSITE" id="PS51084">
    <property type="entry name" value="HIT_2"/>
    <property type="match status" value="1"/>
</dbReference>
<dbReference type="PROSITE" id="PS00028">
    <property type="entry name" value="ZINC_FINGER_C2H2_1"/>
    <property type="match status" value="1"/>
</dbReference>
<name>APTX_HUMAN</name>
<evidence type="ECO:0000250" key="1">
    <source>
        <dbReference type="UniProtKB" id="O74859"/>
    </source>
</evidence>
<evidence type="ECO:0000250" key="2">
    <source>
        <dbReference type="UniProtKB" id="Q7TQC5"/>
    </source>
</evidence>
<evidence type="ECO:0000255" key="3">
    <source>
        <dbReference type="PROSITE-ProRule" id="PRU00042"/>
    </source>
</evidence>
<evidence type="ECO:0000255" key="4">
    <source>
        <dbReference type="PROSITE-ProRule" id="PRU00464"/>
    </source>
</evidence>
<evidence type="ECO:0000256" key="5">
    <source>
        <dbReference type="SAM" id="MobiDB-lite"/>
    </source>
</evidence>
<evidence type="ECO:0000269" key="6">
    <source>
    </source>
</evidence>
<evidence type="ECO:0000269" key="7">
    <source>
    </source>
</evidence>
<evidence type="ECO:0000269" key="8">
    <source>
    </source>
</evidence>
<evidence type="ECO:0000269" key="9">
    <source>
    </source>
</evidence>
<evidence type="ECO:0000269" key="10">
    <source>
    </source>
</evidence>
<evidence type="ECO:0000269" key="11">
    <source>
    </source>
</evidence>
<evidence type="ECO:0000269" key="12">
    <source>
    </source>
</evidence>
<evidence type="ECO:0000269" key="13">
    <source>
    </source>
</evidence>
<evidence type="ECO:0000269" key="14">
    <source>
    </source>
</evidence>
<evidence type="ECO:0000269" key="15">
    <source>
    </source>
</evidence>
<evidence type="ECO:0000269" key="16">
    <source>
    </source>
</evidence>
<evidence type="ECO:0000269" key="17">
    <source>
    </source>
</evidence>
<evidence type="ECO:0000269" key="18">
    <source>
    </source>
</evidence>
<evidence type="ECO:0000269" key="19">
    <source>
    </source>
</evidence>
<evidence type="ECO:0000269" key="20">
    <source>
    </source>
</evidence>
<evidence type="ECO:0000269" key="21">
    <source>
    </source>
</evidence>
<evidence type="ECO:0000269" key="22">
    <source>
    </source>
</evidence>
<evidence type="ECO:0000303" key="23">
    <source>
    </source>
</evidence>
<evidence type="ECO:0000303" key="24">
    <source>
    </source>
</evidence>
<evidence type="ECO:0000303" key="25">
    <source>
    </source>
</evidence>
<evidence type="ECO:0000303" key="26">
    <source>
    </source>
</evidence>
<evidence type="ECO:0000303" key="27">
    <source>
    </source>
</evidence>
<evidence type="ECO:0000303" key="28">
    <source ref="3"/>
</evidence>
<evidence type="ECO:0000303" key="29">
    <source ref="9"/>
</evidence>
<evidence type="ECO:0000305" key="30"/>
<evidence type="ECO:0000305" key="31">
    <source>
    </source>
</evidence>
<evidence type="ECO:0000305" key="32">
    <source>
    </source>
</evidence>
<evidence type="ECO:0000305" key="33">
    <source>
    </source>
</evidence>
<evidence type="ECO:0000305" key="34">
    <source>
    </source>
</evidence>
<evidence type="ECO:0007744" key="35">
    <source>
        <dbReference type="PDB" id="4NDF"/>
    </source>
</evidence>
<evidence type="ECO:0007744" key="36">
    <source>
        <dbReference type="PDB" id="4NDG"/>
    </source>
</evidence>
<evidence type="ECO:0007744" key="37">
    <source>
        <dbReference type="PDB" id="4NDH"/>
    </source>
</evidence>
<evidence type="ECO:0007744" key="38">
    <source>
        <dbReference type="PDB" id="4NDI"/>
    </source>
</evidence>
<evidence type="ECO:0007744" key="39">
    <source>
    </source>
</evidence>
<evidence type="ECO:0007744" key="40">
    <source>
    </source>
</evidence>
<evidence type="ECO:0007829" key="41">
    <source>
        <dbReference type="PDB" id="3KT9"/>
    </source>
</evidence>
<evidence type="ECO:0007829" key="42">
    <source>
        <dbReference type="PDB" id="4NDH"/>
    </source>
</evidence>
<evidence type="ECO:0007829" key="43">
    <source>
        <dbReference type="PDB" id="6CVQ"/>
    </source>
</evidence>
<accession>Q7Z2E3</accession>
<accession>A8MTN4</accession>
<accession>D3DRK9</accession>
<accession>D3DRL0</accession>
<accession>Q0P662</accession>
<accession>Q5T781</accession>
<accession>Q5T782</accession>
<accession>Q5T784</accession>
<accession>Q6JV81</accession>
<accession>Q6JV82</accession>
<accession>Q6JV85</accession>
<accession>Q7Z2F3</accession>
<accession>Q7Z336</accession>
<accession>Q7Z5R5</accession>
<accession>Q7Z6V7</accession>
<accession>Q7Z6V8</accession>
<accession>Q9NXM5</accession>
<organism>
    <name type="scientific">Homo sapiens</name>
    <name type="common">Human</name>
    <dbReference type="NCBI Taxonomy" id="9606"/>
    <lineage>
        <taxon>Eukaryota</taxon>
        <taxon>Metazoa</taxon>
        <taxon>Chordata</taxon>
        <taxon>Craniata</taxon>
        <taxon>Vertebrata</taxon>
        <taxon>Euteleostomi</taxon>
        <taxon>Mammalia</taxon>
        <taxon>Eutheria</taxon>
        <taxon>Euarchontoglires</taxon>
        <taxon>Primates</taxon>
        <taxon>Haplorrhini</taxon>
        <taxon>Catarrhini</taxon>
        <taxon>Hominidae</taxon>
        <taxon>Homo</taxon>
    </lineage>
</organism>
<reference key="1">
    <citation type="journal article" date="2004" name="Neurosci. Lett.">
        <title>Novel splice variants increase molecular diversity of aprataxin, the gene responsible for early-onset ataxia with ocular motor apraxia and hypoalbuminemia.</title>
        <authorList>
            <person name="Hirano M."/>
            <person name="Nishiwaki T."/>
            <person name="Kariya S."/>
            <person name="Furiya Y."/>
            <person name="Kawahara M."/>
            <person name="Ueno S."/>
        </authorList>
    </citation>
    <scope>NUCLEOTIDE SEQUENCE [MRNA] (ISOFORMS 7; 12 AND 13)</scope>
    <scope>ALTERNATIVE SPLICING</scope>
    <scope>SUBCELLULAR LOCATION</scope>
    <scope>TISSUE SPECIFICITY</scope>
</reference>
<reference key="2">
    <citation type="submission" date="2001-06" db="EMBL/GenBank/DDBJ databases">
        <title>Identification of FHA-HIT as a novel nuclear protein involved in cell-cycle regulation.</title>
        <authorList>
            <person name="Huang C.-H."/>
        </authorList>
    </citation>
    <scope>NUCLEOTIDE SEQUENCE [MRNA] (ISOFORM 1)</scope>
</reference>
<reference key="3">
    <citation type="submission" date="2002-12" db="EMBL/GenBank/DDBJ databases">
        <authorList>
            <person name="Chen Y."/>
            <person name="Huang C.-H."/>
        </authorList>
    </citation>
    <scope>NUCLEOTIDE SEQUENCE [MRNA] (ISOFORMS 1; 2; 3; 4; 5; 6; 7; 8 AND 10)</scope>
    <source>
        <tissue>Hypothalamus</tissue>
        <tissue>Kidney</tissue>
        <tissue>Lung adenocarcinoma</tissue>
        <tissue>Lymphoma</tissue>
        <tissue>Melanoma</tissue>
        <tissue>Muscle</tissue>
        <tissue>Retinoblastoma</tissue>
        <tissue>Skin</tissue>
        <tissue>Testis</tissue>
    </source>
</reference>
<reference key="4">
    <citation type="journal article" date="2004" name="Nat. Genet.">
        <title>Complete sequencing and characterization of 21,243 full-length human cDNAs.</title>
        <authorList>
            <person name="Ota T."/>
            <person name="Suzuki Y."/>
            <person name="Nishikawa T."/>
            <person name="Otsuki T."/>
            <person name="Sugiyama T."/>
            <person name="Irie R."/>
            <person name="Wakamatsu A."/>
            <person name="Hayashi K."/>
            <person name="Sato H."/>
            <person name="Nagai K."/>
            <person name="Kimura K."/>
            <person name="Makita H."/>
            <person name="Sekine M."/>
            <person name="Obayashi M."/>
            <person name="Nishi T."/>
            <person name="Shibahara T."/>
            <person name="Tanaka T."/>
            <person name="Ishii S."/>
            <person name="Yamamoto J."/>
            <person name="Saito K."/>
            <person name="Kawai Y."/>
            <person name="Isono Y."/>
            <person name="Nakamura Y."/>
            <person name="Nagahari K."/>
            <person name="Murakami K."/>
            <person name="Yasuda T."/>
            <person name="Iwayanagi T."/>
            <person name="Wagatsuma M."/>
            <person name="Shiratori A."/>
            <person name="Sudo H."/>
            <person name="Hosoiri T."/>
            <person name="Kaku Y."/>
            <person name="Kodaira H."/>
            <person name="Kondo H."/>
            <person name="Sugawara M."/>
            <person name="Takahashi M."/>
            <person name="Kanda K."/>
            <person name="Yokoi T."/>
            <person name="Furuya T."/>
            <person name="Kikkawa E."/>
            <person name="Omura Y."/>
            <person name="Abe K."/>
            <person name="Kamihara K."/>
            <person name="Katsuta N."/>
            <person name="Sato K."/>
            <person name="Tanikawa M."/>
            <person name="Yamazaki M."/>
            <person name="Ninomiya K."/>
            <person name="Ishibashi T."/>
            <person name="Yamashita H."/>
            <person name="Murakawa K."/>
            <person name="Fujimori K."/>
            <person name="Tanai H."/>
            <person name="Kimata M."/>
            <person name="Watanabe M."/>
            <person name="Hiraoka S."/>
            <person name="Chiba Y."/>
            <person name="Ishida S."/>
            <person name="Ono Y."/>
            <person name="Takiguchi S."/>
            <person name="Watanabe S."/>
            <person name="Yosida M."/>
            <person name="Hotuta T."/>
            <person name="Kusano J."/>
            <person name="Kanehori K."/>
            <person name="Takahashi-Fujii A."/>
            <person name="Hara H."/>
            <person name="Tanase T.-O."/>
            <person name="Nomura Y."/>
            <person name="Togiya S."/>
            <person name="Komai F."/>
            <person name="Hara R."/>
            <person name="Takeuchi K."/>
            <person name="Arita M."/>
            <person name="Imose N."/>
            <person name="Musashino K."/>
            <person name="Yuuki H."/>
            <person name="Oshima A."/>
            <person name="Sasaki N."/>
            <person name="Aotsuka S."/>
            <person name="Yoshikawa Y."/>
            <person name="Matsunawa H."/>
            <person name="Ichihara T."/>
            <person name="Shiohata N."/>
            <person name="Sano S."/>
            <person name="Moriya S."/>
            <person name="Momiyama H."/>
            <person name="Satoh N."/>
            <person name="Takami S."/>
            <person name="Terashima Y."/>
            <person name="Suzuki O."/>
            <person name="Nakagawa S."/>
            <person name="Senoh A."/>
            <person name="Mizoguchi H."/>
            <person name="Goto Y."/>
            <person name="Shimizu F."/>
            <person name="Wakebe H."/>
            <person name="Hishigaki H."/>
            <person name="Watanabe T."/>
            <person name="Sugiyama A."/>
            <person name="Takemoto M."/>
            <person name="Kawakami B."/>
            <person name="Yamazaki M."/>
            <person name="Watanabe K."/>
            <person name="Kumagai A."/>
            <person name="Itakura S."/>
            <person name="Fukuzumi Y."/>
            <person name="Fujimori Y."/>
            <person name="Komiyama M."/>
            <person name="Tashiro H."/>
            <person name="Tanigami A."/>
            <person name="Fujiwara T."/>
            <person name="Ono T."/>
            <person name="Yamada K."/>
            <person name="Fujii Y."/>
            <person name="Ozaki K."/>
            <person name="Hirao M."/>
            <person name="Ohmori Y."/>
            <person name="Kawabata A."/>
            <person name="Hikiji T."/>
            <person name="Kobatake N."/>
            <person name="Inagaki H."/>
            <person name="Ikema Y."/>
            <person name="Okamoto S."/>
            <person name="Okitani R."/>
            <person name="Kawakami T."/>
            <person name="Noguchi S."/>
            <person name="Itoh T."/>
            <person name="Shigeta K."/>
            <person name="Senba T."/>
            <person name="Matsumura K."/>
            <person name="Nakajima Y."/>
            <person name="Mizuno T."/>
            <person name="Morinaga M."/>
            <person name="Sasaki M."/>
            <person name="Togashi T."/>
            <person name="Oyama M."/>
            <person name="Hata H."/>
            <person name="Watanabe M."/>
            <person name="Komatsu T."/>
            <person name="Mizushima-Sugano J."/>
            <person name="Satoh T."/>
            <person name="Shirai Y."/>
            <person name="Takahashi Y."/>
            <person name="Nakagawa K."/>
            <person name="Okumura K."/>
            <person name="Nagase T."/>
            <person name="Nomura N."/>
            <person name="Kikuchi H."/>
            <person name="Masuho Y."/>
            <person name="Yamashita R."/>
            <person name="Nakai K."/>
            <person name="Yada T."/>
            <person name="Nakamura Y."/>
            <person name="Ohara O."/>
            <person name="Isogai T."/>
            <person name="Sugano S."/>
        </authorList>
    </citation>
    <scope>NUCLEOTIDE SEQUENCE [LARGE SCALE MRNA] (ISOFORMS 2 AND 11)</scope>
    <source>
        <tissue>Colon</tissue>
    </source>
</reference>
<reference key="5">
    <citation type="journal article" date="2007" name="BMC Genomics">
        <title>The full-ORF clone resource of the German cDNA consortium.</title>
        <authorList>
            <person name="Bechtel S."/>
            <person name="Rosenfelder H."/>
            <person name="Duda A."/>
            <person name="Schmidt C.P."/>
            <person name="Ernst U."/>
            <person name="Wellenreuther R."/>
            <person name="Mehrle A."/>
            <person name="Schuster C."/>
            <person name="Bahr A."/>
            <person name="Bloecker H."/>
            <person name="Heubner D."/>
            <person name="Hoerlein A."/>
            <person name="Michel G."/>
            <person name="Wedler H."/>
            <person name="Koehrer K."/>
            <person name="Ottenwaelder B."/>
            <person name="Poustka A."/>
            <person name="Wiemann S."/>
            <person name="Schupp I."/>
        </authorList>
    </citation>
    <scope>NUCLEOTIDE SEQUENCE [LARGE SCALE MRNA] (ISOFORM 9)</scope>
    <source>
        <tissue>Endometrium</tissue>
    </source>
</reference>
<reference key="6">
    <citation type="journal article" date="2004" name="Nature">
        <title>DNA sequence and analysis of human chromosome 9.</title>
        <authorList>
            <person name="Humphray S.J."/>
            <person name="Oliver K."/>
            <person name="Hunt A.R."/>
            <person name="Plumb R.W."/>
            <person name="Loveland J.E."/>
            <person name="Howe K.L."/>
            <person name="Andrews T.D."/>
            <person name="Searle S."/>
            <person name="Hunt S.E."/>
            <person name="Scott C.E."/>
            <person name="Jones M.C."/>
            <person name="Ainscough R."/>
            <person name="Almeida J.P."/>
            <person name="Ambrose K.D."/>
            <person name="Ashwell R.I.S."/>
            <person name="Babbage A.K."/>
            <person name="Babbage S."/>
            <person name="Bagguley C.L."/>
            <person name="Bailey J."/>
            <person name="Banerjee R."/>
            <person name="Barker D.J."/>
            <person name="Barlow K.F."/>
            <person name="Bates K."/>
            <person name="Beasley H."/>
            <person name="Beasley O."/>
            <person name="Bird C.P."/>
            <person name="Bray-Allen S."/>
            <person name="Brown A.J."/>
            <person name="Brown J.Y."/>
            <person name="Burford D."/>
            <person name="Burrill W."/>
            <person name="Burton J."/>
            <person name="Carder C."/>
            <person name="Carter N.P."/>
            <person name="Chapman J.C."/>
            <person name="Chen Y."/>
            <person name="Clarke G."/>
            <person name="Clark S.Y."/>
            <person name="Clee C.M."/>
            <person name="Clegg S."/>
            <person name="Collier R.E."/>
            <person name="Corby N."/>
            <person name="Crosier M."/>
            <person name="Cummings A.T."/>
            <person name="Davies J."/>
            <person name="Dhami P."/>
            <person name="Dunn M."/>
            <person name="Dutta I."/>
            <person name="Dyer L.W."/>
            <person name="Earthrowl M.E."/>
            <person name="Faulkner L."/>
            <person name="Fleming C.J."/>
            <person name="Frankish A."/>
            <person name="Frankland J.A."/>
            <person name="French L."/>
            <person name="Fricker D.G."/>
            <person name="Garner P."/>
            <person name="Garnett J."/>
            <person name="Ghori J."/>
            <person name="Gilbert J.G.R."/>
            <person name="Glison C."/>
            <person name="Grafham D.V."/>
            <person name="Gribble S."/>
            <person name="Griffiths C."/>
            <person name="Griffiths-Jones S."/>
            <person name="Grocock R."/>
            <person name="Guy J."/>
            <person name="Hall R.E."/>
            <person name="Hammond S."/>
            <person name="Harley J.L."/>
            <person name="Harrison E.S.I."/>
            <person name="Hart E.A."/>
            <person name="Heath P.D."/>
            <person name="Henderson C.D."/>
            <person name="Hopkins B.L."/>
            <person name="Howard P.J."/>
            <person name="Howden P.J."/>
            <person name="Huckle E."/>
            <person name="Johnson C."/>
            <person name="Johnson D."/>
            <person name="Joy A.A."/>
            <person name="Kay M."/>
            <person name="Keenan S."/>
            <person name="Kershaw J.K."/>
            <person name="Kimberley A.M."/>
            <person name="King A."/>
            <person name="Knights A."/>
            <person name="Laird G.K."/>
            <person name="Langford C."/>
            <person name="Lawlor S."/>
            <person name="Leongamornlert D.A."/>
            <person name="Leversha M."/>
            <person name="Lloyd C."/>
            <person name="Lloyd D.M."/>
            <person name="Lovell J."/>
            <person name="Martin S."/>
            <person name="Mashreghi-Mohammadi M."/>
            <person name="Matthews L."/>
            <person name="McLaren S."/>
            <person name="McLay K.E."/>
            <person name="McMurray A."/>
            <person name="Milne S."/>
            <person name="Nickerson T."/>
            <person name="Nisbett J."/>
            <person name="Nordsiek G."/>
            <person name="Pearce A.V."/>
            <person name="Peck A.I."/>
            <person name="Porter K.M."/>
            <person name="Pandian R."/>
            <person name="Pelan S."/>
            <person name="Phillimore B."/>
            <person name="Povey S."/>
            <person name="Ramsey Y."/>
            <person name="Rand V."/>
            <person name="Scharfe M."/>
            <person name="Sehra H.K."/>
            <person name="Shownkeen R."/>
            <person name="Sims S.K."/>
            <person name="Skuce C.D."/>
            <person name="Smith M."/>
            <person name="Steward C.A."/>
            <person name="Swarbreck D."/>
            <person name="Sycamore N."/>
            <person name="Tester J."/>
            <person name="Thorpe A."/>
            <person name="Tracey A."/>
            <person name="Tromans A."/>
            <person name="Thomas D.W."/>
            <person name="Wall M."/>
            <person name="Wallis J.M."/>
            <person name="West A.P."/>
            <person name="Whitehead S.L."/>
            <person name="Willey D.L."/>
            <person name="Williams S.A."/>
            <person name="Wilming L."/>
            <person name="Wray P.W."/>
            <person name="Young L."/>
            <person name="Ashurst J.L."/>
            <person name="Coulson A."/>
            <person name="Blocker H."/>
            <person name="Durbin R.M."/>
            <person name="Sulston J.E."/>
            <person name="Hubbard T."/>
            <person name="Jackson M.J."/>
            <person name="Bentley D.R."/>
            <person name="Beck S."/>
            <person name="Rogers J."/>
            <person name="Dunham I."/>
        </authorList>
    </citation>
    <scope>NUCLEOTIDE SEQUENCE [LARGE SCALE GENOMIC DNA]</scope>
</reference>
<reference key="7">
    <citation type="submission" date="2005-09" db="EMBL/GenBank/DDBJ databases">
        <authorList>
            <person name="Mural R.J."/>
            <person name="Istrail S."/>
            <person name="Sutton G.G."/>
            <person name="Florea L."/>
            <person name="Halpern A.L."/>
            <person name="Mobarry C.M."/>
            <person name="Lippert R."/>
            <person name="Walenz B."/>
            <person name="Shatkay H."/>
            <person name="Dew I."/>
            <person name="Miller J.R."/>
            <person name="Flanigan M.J."/>
            <person name="Edwards N.J."/>
            <person name="Bolanos R."/>
            <person name="Fasulo D."/>
            <person name="Halldorsson B.V."/>
            <person name="Hannenhalli S."/>
            <person name="Turner R."/>
            <person name="Yooseph S."/>
            <person name="Lu F."/>
            <person name="Nusskern D.R."/>
            <person name="Shue B.C."/>
            <person name="Zheng X.H."/>
            <person name="Zhong F."/>
            <person name="Delcher A.L."/>
            <person name="Huson D.H."/>
            <person name="Kravitz S.A."/>
            <person name="Mouchard L."/>
            <person name="Reinert K."/>
            <person name="Remington K.A."/>
            <person name="Clark A.G."/>
            <person name="Waterman M.S."/>
            <person name="Eichler E.E."/>
            <person name="Adams M.D."/>
            <person name="Hunkapiller M.W."/>
            <person name="Myers E.W."/>
            <person name="Venter J.C."/>
        </authorList>
    </citation>
    <scope>NUCLEOTIDE SEQUENCE [LARGE SCALE GENOMIC DNA]</scope>
</reference>
<reference key="8">
    <citation type="journal article" date="2004" name="Genome Res.">
        <title>The status, quality, and expansion of the NIH full-length cDNA project: the Mammalian Gene Collection (MGC).</title>
        <authorList>
            <consortium name="The MGC Project Team"/>
        </authorList>
    </citation>
    <scope>NUCLEOTIDE SEQUENCE [LARGE SCALE MRNA] (ISOFORMS 2; 4 AND 7)</scope>
    <source>
        <tissue>Brain</tissue>
        <tissue>Lung</tissue>
        <tissue>Lymph</tissue>
    </source>
</reference>
<reference key="9">
    <citation type="submission" date="2003-06" db="EMBL/GenBank/DDBJ databases">
        <title>Mutations in the APTX gene.</title>
        <authorList>
            <person name="Hellenbroich Y."/>
            <person name="Habeck M."/>
        </authorList>
    </citation>
    <scope>NUCLEOTIDE SEQUENCE [MRNA] OF 1-261 (ISOFORMS 2; 4; 5 AND 7)</scope>
    <source>
        <tissue>Brain</tissue>
    </source>
</reference>
<reference key="10">
    <citation type="journal article" date="2001" name="Nat. Genet.">
        <title>Early-onset ataxia with ocular motor apraxia and hypoalbuminemia is caused by mutations in a new HIT superfamily gene.</title>
        <authorList>
            <person name="Date H."/>
            <person name="Onodera O."/>
            <person name="Tanaka H."/>
            <person name="Iwabuchi K."/>
            <person name="Uekawa K."/>
            <person name="Igarashi S."/>
            <person name="Koike R."/>
            <person name="Hiroi T."/>
            <person name="Yuasa T."/>
            <person name="Awaya Y."/>
            <person name="Sakai T."/>
            <person name="Takahashi T."/>
            <person name="Nagatomo H."/>
            <person name="Sekijima Y."/>
            <person name="Kawachi I."/>
            <person name="Takiyama Y."/>
            <person name="Nishizawa M."/>
            <person name="Fukuhara N."/>
            <person name="Saito K."/>
            <person name="Sugano S."/>
            <person name="Tsuji S."/>
        </authorList>
    </citation>
    <scope>TISSUE SPECIFICITY</scope>
    <scope>VARIANTS AOA LEU-220 AND GLY-277</scope>
</reference>
<reference key="11">
    <citation type="journal article" date="2001" name="Nat. Genet.">
        <title>The gene mutated in ataxia-ocular apraxia 1 encodes the new HIT/Zn-finger protein aprataxin.</title>
        <authorList>
            <person name="Moreira M.-C."/>
            <person name="Barbot C."/>
            <person name="Tachi N."/>
            <person name="Kozuka N."/>
            <person name="Uchida E."/>
            <person name="Gibson T."/>
            <person name="Mendonca P."/>
            <person name="Costa M."/>
            <person name="Barros J."/>
            <person name="Yanagisawa T."/>
            <person name="Watanabe M."/>
            <person name="Ikeda Y."/>
            <person name="Aoki M."/>
            <person name="Nagata T."/>
            <person name="Coutinho P."/>
            <person name="Sequeiros J."/>
            <person name="Koenig M."/>
        </authorList>
    </citation>
    <scope>ALTERNATIVE SPLICING</scope>
    <scope>TISSUE SPECIFICITY</scope>
    <scope>VARIANTS AOA HIS-213 AND LEU-220</scope>
</reference>
<reference key="12">
    <citation type="journal article" date="2004" name="Ann. Neurol.">
        <title>Aprataxin, the causative protein for EAOH is a nuclear protein with a potential role as a DNA repair protein.</title>
        <authorList>
            <person name="Sano Y."/>
            <person name="Date H."/>
            <person name="Igarashi S."/>
            <person name="Onodera O."/>
            <person name="Oyake M."/>
            <person name="Takahashi T."/>
            <person name="Hayashi S."/>
            <person name="Morimatsu M."/>
            <person name="Takahashi H."/>
            <person name="Makifuchi T."/>
            <person name="Fukuhara N."/>
            <person name="Tsuji S."/>
        </authorList>
    </citation>
    <scope>SUBCELLULAR LOCATION</scope>
    <scope>TISSUE SPECIFICITY</scope>
    <scope>INTERACTION WITH XRCC1</scope>
</reference>
<reference key="13">
    <citation type="journal article" date="2004" name="DNA Repair">
        <title>The ataxia-oculomotor apraxia 1 gene product has a role distinct from ATM and interacts with the DNA strand break repair proteins XRCC1 and XRCC4.</title>
        <authorList>
            <person name="Clements P.M."/>
            <person name="Breslin C."/>
            <person name="Deeks E.D."/>
            <person name="Byrd P.J."/>
            <person name="Ju L."/>
            <person name="Bieganowski P."/>
            <person name="Brenner C."/>
            <person name="Moreira M.-C."/>
            <person name="Taylor A.M.R."/>
            <person name="Caldecott K.W."/>
        </authorList>
    </citation>
    <scope>FUNCTION</scope>
    <scope>INTERACTION WITH XRCC1 AND XRCC4</scope>
    <scope>SUBCELLULAR LOCATION</scope>
    <scope>MUTAGENESIS OF ARG-43</scope>
</reference>
<reference key="14">
    <citation type="journal article" date="2004" name="Hum. Mol. Genet.">
        <title>Aprataxin, a novel protein that protects against genotoxic stress.</title>
        <authorList>
            <person name="Gueven N."/>
            <person name="Becherel O.J."/>
            <person name="Kijas A.W."/>
            <person name="Chen P."/>
            <person name="Howe O."/>
            <person name="Rudolph J.H."/>
            <person name="Gatti R."/>
            <person name="Date H."/>
            <person name="Onodera O."/>
            <person name="Taucher-Scholz G."/>
            <person name="Lavin M.F."/>
        </authorList>
    </citation>
    <scope>FUNCTION</scope>
    <scope>SUBCELLULAR LOCATION</scope>
    <scope>INTERACTION WITH XRCC1; PARP1; TP53 AND NCL</scope>
</reference>
<reference key="15">
    <citation type="journal article" date="2006" name="Hum. Mol. Genet.">
        <title>Nucleolar localization of aprataxin is dependent on interaction with nucleolin and on active ribosomal DNA transcription.</title>
        <authorList>
            <person name="Becherel O.J."/>
            <person name="Gueven N."/>
            <person name="Birrell G.W."/>
            <person name="Schreiber V."/>
            <person name="Suraweera A."/>
            <person name="Jakob B."/>
            <person name="Taucher-Scholz G."/>
            <person name="Lavin M.F."/>
        </authorList>
    </citation>
    <scope>SUBCELLULAR LOCATION</scope>
    <scope>INTERACTION WITH XRCC1 AND NCL</scope>
</reference>
<reference key="16">
    <citation type="journal article" date="2006" name="J. Biol. Chem.">
        <title>Aprataxin forms a discrete branch in the HIT (histidine triad) superfamily of proteins with both DNA/RNA binding and nucleotide hydrolase activities.</title>
        <authorList>
            <person name="Kijas A.W."/>
            <person name="Harris J.L."/>
            <person name="Harris J.M."/>
            <person name="Lavin M.F."/>
        </authorList>
    </citation>
    <scope>FUNCTION</scope>
    <scope>CATALYTIC ACTIVITY</scope>
    <scope>BIOPHYSICOCHEMICAL PROPERTIES</scope>
    <scope>DNA-BINDING</scope>
    <scope>CHARACTERIZATION OF VARIANT GLY-277</scope>
</reference>
<reference key="17">
    <citation type="journal article" date="2006" name="Nature">
        <title>The neurodegenerative disease protein aprataxin resolves abortive DNA ligation intermediates.</title>
        <authorList>
            <person name="Ahel I."/>
            <person name="Rass U."/>
            <person name="El-Khamisy S.F."/>
            <person name="Katyal S."/>
            <person name="Clements P.M."/>
            <person name="McKinnon P.J."/>
            <person name="Caldecott K.W."/>
            <person name="West S.C."/>
        </authorList>
    </citation>
    <scope>FUNCTION</scope>
    <scope>CATALYTIC ACTIVITY</scope>
    <scope>MUTAGENESIS OF HIS-274</scope>
</reference>
<reference key="18">
    <citation type="journal article" date="2007" name="J. Biol. Chem.">
        <title>Actions of aprataxin in multiple DNA repair pathways.</title>
        <authorList>
            <person name="Rass U."/>
            <person name="Ahel I."/>
            <person name="West S.C."/>
        </authorList>
    </citation>
    <scope>FUNCTION</scope>
    <scope>CATALYTIC ACTIVITY</scope>
    <scope>MUTAGENESIS OF HIS-274; CYS-333 AND CYS-336</scope>
</reference>
<reference key="19">
    <citation type="journal article" date="2011" name="Sci. Signal.">
        <title>System-wide temporal characterization of the proteome and phosphoproteome of human embryonic stem cell differentiation.</title>
        <authorList>
            <person name="Rigbolt K.T."/>
            <person name="Prokhorova T.A."/>
            <person name="Akimov V."/>
            <person name="Henningsen J."/>
            <person name="Johansen P.T."/>
            <person name="Kratchmarova I."/>
            <person name="Kassem M."/>
            <person name="Mann M."/>
            <person name="Olsen J.V."/>
            <person name="Blagoev B."/>
        </authorList>
    </citation>
    <scope>PHOSPHORYLATION [LARGE SCALE ANALYSIS] AT SER-132</scope>
    <scope>IDENTIFICATION BY MASS SPECTROMETRY [LARGE SCALE ANALYSIS]</scope>
</reference>
<reference key="20">
    <citation type="journal article" date="2014" name="J. Proteomics">
        <title>An enzyme assisted RP-RPLC approach for in-depth analysis of human liver phosphoproteome.</title>
        <authorList>
            <person name="Bian Y."/>
            <person name="Song C."/>
            <person name="Cheng K."/>
            <person name="Dong M."/>
            <person name="Wang F."/>
            <person name="Huang J."/>
            <person name="Sun D."/>
            <person name="Wang L."/>
            <person name="Ye M."/>
            <person name="Zou H."/>
        </authorList>
    </citation>
    <scope>PHOSPHORYLATION [LARGE SCALE ANALYSIS] AT SER-132</scope>
    <scope>IDENTIFICATION BY MASS SPECTROMETRY [LARGE SCALE ANALYSIS]</scope>
    <source>
        <tissue>Liver</tissue>
    </source>
</reference>
<reference key="21">
    <citation type="journal article" date="2010" name="Nucleic Acids Res.">
        <title>CK2 phosphorylation-dependent interaction between aprataxin and MDC1 in the DNA damage response.</title>
        <authorList>
            <person name="Becherel O.J."/>
            <person name="Jakob B."/>
            <person name="Cherry A.L."/>
            <person name="Gueven N."/>
            <person name="Fusser M."/>
            <person name="Kijas A.W."/>
            <person name="Peng C."/>
            <person name="Katyal S."/>
            <person name="McKinnon P.J."/>
            <person name="Chen J."/>
            <person name="Epe B."/>
            <person name="Smerdon S.J."/>
            <person name="Taucher-Scholz G."/>
            <person name="Lavin M.F."/>
        </authorList>
    </citation>
    <scope>X-RAY CRYSTALLOGRAPHY (1.65 ANGSTROMS) OF 15-116</scope>
    <scope>SUBCELLULAR LOCATION</scope>
    <scope>INTERACTION WITH MDC1</scope>
    <scope>MUTAGENESIS OF ARG-43 AND LYS-52</scope>
</reference>
<reference evidence="35 36 37 38" key="22">
    <citation type="journal article" date="2014" name="Nature">
        <title>Aprataxin resolves adenylated RNA-DNA junctions to maintain genome integrity.</title>
        <authorList>
            <person name="Tumbale P."/>
            <person name="Williams J.S."/>
            <person name="Schellenberg M.J."/>
            <person name="Kunkel T.A."/>
            <person name="Williams R.S."/>
        </authorList>
    </citation>
    <scope>X-RAY CRYSTALLOGRAPHY (1.85 ANGSTROMS) OF 179-356 IN COMPLEXES WITH DNA; RNA; ZINC; AMP AND ADENOSINE-5'-VANADATE</scope>
    <scope>FUNCTION</scope>
    <scope>CATALYTIC ACTIVITY</scope>
    <scope>ACTIVE SITE</scope>
    <scope>CHARACTERIZATION OF VARIANT AOA GLN-211</scope>
</reference>
<reference key="23">
    <citation type="journal article" date="2002" name="Neurology">
        <title>Early-onset ataxia with ocular motor apraxia and hypoalbuminemia: the aprataxin gene mutations.</title>
        <authorList>
            <person name="Shimazaki H."/>
            <person name="Takiyama Y."/>
            <person name="Sakoe K."/>
            <person name="Ikeguchi K."/>
            <person name="Niijima K."/>
            <person name="Kaneko J."/>
            <person name="Namekawa M."/>
            <person name="Ogawa T."/>
            <person name="Date H."/>
            <person name="Tsuji S."/>
            <person name="Nakano I."/>
            <person name="Nishizawa M."/>
        </authorList>
    </citation>
    <scope>VARIANT AOA ARG-215</scope>
</reference>
<reference key="24">
    <citation type="journal article" date="2003" name="Neurology">
        <title>Phenotypic variability of aprataxin gene mutations.</title>
        <authorList>
            <person name="Tranchant C."/>
            <person name="Fleury M."/>
            <person name="Moreira M.-C."/>
            <person name="Koenig M."/>
            <person name="Warter J.-M."/>
        </authorList>
    </citation>
    <scope>VARIANT AOA GLN-211</scope>
</reference>
<reference key="25">
    <citation type="journal article" date="2003" name="Brain">
        <title>Cerebellar ataxia with oculomotor apRAxia type 1: clinical and genetic studies.</title>
        <authorList>
            <person name="Le Ber I."/>
            <person name="Moreira M.-C."/>
            <person name="Rivaud-Pechoux S."/>
            <person name="Chamayou C."/>
            <person name="Ochsner F."/>
            <person name="Kuntzer T."/>
            <person name="Tardieu M."/>
            <person name="Saied G."/>
            <person name="Habert M.-O."/>
            <person name="Demarquay G."/>
            <person name="Tannier C."/>
            <person name="Beis J.-M."/>
            <person name="Brice A."/>
            <person name="Koenig M."/>
            <person name="Duerr A."/>
        </authorList>
    </citation>
    <scope>VARIANTS AOA VAL-212; GLY-277 AND ARG-293</scope>
</reference>
<reference key="26">
    <citation type="journal article" date="2005" name="Ann. Neurol.">
        <title>Very late onset in ataxia oculomotor apraxia type I.</title>
        <authorList>
            <person name="Criscuolo C."/>
            <person name="Mancini P."/>
            <person name="Menchise V."/>
            <person name="Sacca F."/>
            <person name="De Michele G."/>
            <person name="Banfi S."/>
            <person name="Filla A."/>
        </authorList>
    </citation>
    <scope>VARIANT AOA PRO-237</scope>
</reference>
<reference key="27">
    <citation type="journal article" date="2005" name="Neurology">
        <title>Coenzyme Q deficiency and cerebellar ataxia associated with an aprataxin mutation.</title>
        <authorList>
            <person name="Quinzii C.M."/>
            <person name="Kattah A.G."/>
            <person name="Naini A."/>
            <person name="Akman H.O."/>
            <person name="Mootha V.K."/>
            <person name="DiMauro S."/>
            <person name="Hirano M."/>
        </authorList>
    </citation>
    <scope>INVOLVEMENT IN AOA</scope>
</reference>
<keyword id="KW-0002">3D-structure</keyword>
<keyword id="KW-0025">Alternative splicing</keyword>
<keyword id="KW-0963">Cytoplasm</keyword>
<keyword id="KW-0225">Disease variant</keyword>
<keyword id="KW-0227">DNA damage</keyword>
<keyword id="KW-0234">DNA repair</keyword>
<keyword id="KW-0238">DNA-binding</keyword>
<keyword id="KW-0378">Hydrolase</keyword>
<keyword id="KW-0479">Metal-binding</keyword>
<keyword id="KW-0523">Neurodegeneration</keyword>
<keyword id="KW-0539">Nucleus</keyword>
<keyword id="KW-0597">Phosphoprotein</keyword>
<keyword id="KW-1267">Proteomics identification</keyword>
<keyword id="KW-1185">Reference proteome</keyword>
<keyword id="KW-0862">Zinc</keyword>
<keyword id="KW-0863">Zinc-finger</keyword>